<sequence length="2185" mass="243453">MGAQVSTQKTGAHETRLNASGNSIIHYTNINYYKDAASNSANRQDFTQDPGKFTEPVKDIMIKSLPALNSPTVEECGYSDRARSITLGNSTITTQECANVVVGYGVWPDYLKDSEATAEDQPTQPDVATCRFYTLDSVQWQKTSPGWWWKLPDALSNLGLFGQNMQYHYLGRTGYTVHVQCNASKFHQGCLLVVCVPEAEMGCATLDNTPSSAELLGGDTAKEFADKPVASGSNKLVQRVVYNAGMGVGVGNLTIFPHQWINLRTNNSATIVMPYTNSVPMDNMFRHNNVTLMVIPFVPLDYCPGSTTYVPITVTIAPMCAEYNGLRLAGHQGLPTMNTPGSCQFLTSDDFQSPSAMPQYDVTPEMRIPGEVKNLMEIAEVDSVVPVQNVGEKVNSMEAYQIPVRSNEGSGTQVFGFPLQPGYSSVFSRTLLGEILNYYTHWSGSIKLTFMFCGSAMATGKFLLAYSPPGAGAPTKRVDAMLGTHVIWDVGLQSSCVLCIPWISQTHYRFVASDEYTAGGFITCWYQTNIVVPADAQSSCYIMCFVSACNDFSVRLLKDTPFISQQNFFQGPVEDAITAAIGRVADTVGTGPTNSEAIPALTAAETGHTSQVVPGDTMQTRHVKNYHSRSESTIENFLCRSACVYFTEYKNSGAKRYAEWVLTPRQAAQLRRKLEFFTYVRFDLELTFVITSTQQPSTTQNQDAQILTHQIMYVPPGGPVPDKVDSYVWQTSTNPSVFWTEGNAPPRMSIPFLSIGNAYSNFYDGWSEFSRNGVYGINTLNNMGTLYARHVNAGSTGPIKSTIRIYFKPKHVKAWIPRPPRLCQYEKAKNVNFQPSGVTTTRQSITTMTNTGAFGQQSGAVYVGNYRVVNRHLATSADWQNCVWESYNRDLLVSTTTAHGCDIIARCQCTTGVYFCASKNKHYPISFEGPGLVEVQESEYYPRRYQSHVLLAAGFSEPGDCGGILRCEHGVIGIVTMGGEGVVGFADIRDLLWLEDDAMEQGVKDYVEQLGNAFGSGFTNQICEQVNLLKESLVGQDSILEKSLKALVKIISALVIVVRNHDDLITVTATLALIGCTSSPWRWLKQKVSQYYGIPMAERQNNSWLKKFTEMTNACKGMEWIAVKIQKFIEWLKVKILPEVREKHEFLNRLKQLPLLESQIATIEQSAPSQSDQEQLFSNVQYFAHYCRKYAPLYAAEAKRVFSLEKKMSNYIQFKSKCRIEPVCLLLHGSPGAGKSVATNLIGRSLAEKLNSSVYSLPPDPDHFDGYKQQAVVIMDDLCQNPDGKDVSLFCQMVSSVDFVPPMAALEEKGILFTSPFVLASTNAGSINAPTVSDSRALARRFHFDMNIEVISMYSQNGKINMPMSVKTCDDECCPVNFKKCCPLVCGKAIQFIDRRTQVRYSLDMLVTEMFREYNHRHSVGTTLEALFQGPPVYREIKISVAPETPPPPAIADLLKSVDSEAVREYCKEKGWLVPEINSTLQIEKHVSRAFICLQALTTFVSVAGIIYIIYKLFAGFQGAYTGVPNQKPRVPTLRQAKVQGPAFEFAVAMMKRNSSTVKTEYGEFTMLGIYDRWAVLPRHAKPGPTILMNDQEVGVLDAKELVDKDGTNLELTLLKLNRNEKFRDIRGFLAKEEVEVNEAVLAINTSKFPNMYIPVGQVTEYGFLNLGGTPTKRMLMYNFPTRAGQCGGVLMSTGKVLGIHVGGNGHQGFSAALLKHYFNDEQGEIEFIESSKDAGFPVINTPSKTKLEPSVFHQVFEGNKEPAVLRSGDPRLKANFEEAIFSKYIGNVNTHVDEYMLEAVDHYAGQLATLDISTEPMKLEDAVYGTEGLEALDLTTSAGYPYVALGIKKRDILSKKTKDLTKLKECMDKYGLNLPMVTYVKDELRSIEKVAKGKSRLIEASSLNDSVAMRQTFGNLYKTFHLNPGVVTGSAVGCDPDLFWSKIPVMLDGHLIAFDYSGYDASLSPVWFACLKMLLEKLGYTHKETNYIDYLCNSHHLYRDKHYFVRGGMPSGCSGTSIFNSMINNIIIRTLMLKVYKGIDLDQFRMIAYGDDVIASYPWPIDASLLAEAGKGYGLIMTPADKGECFNEVTWTNATFLKRYFRADEQYPFLVHPVMPMKDIHESIRWTKDPKNTQDHVRSLCLLAWHNGEHEYEEFIRKIRSVPVGRCLTLPAFSTLRRKWLDSF</sequence>
<dbReference type="EC" id="3.4.22.29" evidence="2"/>
<dbReference type="EC" id="3.6.1.15" evidence="2"/>
<dbReference type="EC" id="3.4.22.28" evidence="11"/>
<dbReference type="EC" id="2.7.7.48" evidence="9"/>
<dbReference type="EMBL" id="M33854">
    <property type="protein sequence ID" value="AAA42931.1"/>
    <property type="molecule type" value="Genomic_RNA"/>
</dbReference>
<dbReference type="EMBL" id="K02709">
    <property type="protein sequence ID" value="AAA42932.1"/>
    <property type="molecule type" value="Genomic_RNA"/>
</dbReference>
<dbReference type="EMBL" id="M16572">
    <property type="protein sequence ID" value="AAA74400.1"/>
    <property type="molecule type" value="Genomic_RNA"/>
</dbReference>
<dbReference type="EMBL" id="JX312064">
    <property type="protein sequence ID" value="AFS18536.1"/>
    <property type="molecule type" value="Genomic_RNA"/>
</dbReference>
<dbReference type="PIR" id="A26354">
    <property type="entry name" value="GNNYB3"/>
</dbReference>
<dbReference type="PIR" id="A34664">
    <property type="entry name" value="GNNYBT"/>
</dbReference>
<dbReference type="PDB" id="2VB0">
    <property type="method" value="X-ray"/>
    <property type="resolution" value="2.40 A"/>
    <property type="chains" value="A=1541-1723"/>
</dbReference>
<dbReference type="PDB" id="2ZTX">
    <property type="method" value="X-ray"/>
    <property type="resolution" value="1.72 A"/>
    <property type="chains" value="A=1541-1723"/>
</dbReference>
<dbReference type="PDB" id="2ZTY">
    <property type="method" value="X-ray"/>
    <property type="resolution" value="1.72 A"/>
    <property type="chains" value="A=1541-1723"/>
</dbReference>
<dbReference type="PDB" id="2ZTZ">
    <property type="method" value="X-ray"/>
    <property type="resolution" value="2.00 A"/>
    <property type="chains" value="A/B=1541-1723"/>
</dbReference>
<dbReference type="PDB" id="2ZU1">
    <property type="method" value="X-ray"/>
    <property type="resolution" value="1.38 A"/>
    <property type="chains" value="A/B=1541-1723"/>
</dbReference>
<dbReference type="PDB" id="2ZU3">
    <property type="method" value="X-ray"/>
    <property type="resolution" value="1.75 A"/>
    <property type="chains" value="A=1541-1723"/>
</dbReference>
<dbReference type="PDB" id="3CDU">
    <property type="method" value="X-ray"/>
    <property type="resolution" value="2.10 A"/>
    <property type="chains" value="A=1724-2185"/>
</dbReference>
<dbReference type="PDB" id="3CDW">
    <property type="method" value="X-ray"/>
    <property type="resolution" value="2.50 A"/>
    <property type="chains" value="A=1724-2185, H=1519-1540"/>
</dbReference>
<dbReference type="PDB" id="4WFX">
    <property type="method" value="X-ray"/>
    <property type="resolution" value="1.81 A"/>
    <property type="chains" value="A=1724-2185"/>
</dbReference>
<dbReference type="PDB" id="4WFY">
    <property type="method" value="X-ray"/>
    <property type="resolution" value="2.06 A"/>
    <property type="chains" value="A=1724-2185"/>
</dbReference>
<dbReference type="PDB" id="4WFZ">
    <property type="method" value="X-ray"/>
    <property type="resolution" value="1.80 A"/>
    <property type="chains" value="A=1724-2185"/>
</dbReference>
<dbReference type="PDB" id="4Y2A">
    <property type="method" value="X-ray"/>
    <property type="resolution" value="2.90 A"/>
    <property type="chains" value="A=1724-2185"/>
</dbReference>
<dbReference type="PDB" id="6S3A">
    <property type="method" value="X-ray"/>
    <property type="resolution" value="1.52 A"/>
    <property type="chains" value="A=1216-1429"/>
</dbReference>
<dbReference type="PDB" id="6T3W">
    <property type="method" value="X-ray"/>
    <property type="resolution" value="1.82 A"/>
    <property type="chains" value="A=1216-1429"/>
</dbReference>
<dbReference type="PDB" id="7LMS">
    <property type="method" value="EM"/>
    <property type="resolution" value="3.50 A"/>
    <property type="chains" value="B=855-1001"/>
</dbReference>
<dbReference type="PDB" id="7QUW">
    <property type="method" value="X-ray"/>
    <property type="resolution" value="1.65 A"/>
    <property type="chains" value="AAA=1541-1720"/>
</dbReference>
<dbReference type="PDB" id="7W0Q">
    <property type="method" value="X-ray"/>
    <property type="resolution" value="1.10 A"/>
    <property type="chains" value="B=1420-1429"/>
</dbReference>
<dbReference type="PDB" id="7W0S">
    <property type="method" value="X-ray"/>
    <property type="resolution" value="1.40 A"/>
    <property type="chains" value="A/D/F=1420-1429"/>
</dbReference>
<dbReference type="PDB" id="7W0T">
    <property type="method" value="X-ray"/>
    <property type="resolution" value="1.57 A"/>
    <property type="chains" value="A/D/E=1420-1429"/>
</dbReference>
<dbReference type="PDB" id="8S6F">
    <property type="method" value="X-ray"/>
    <property type="resolution" value="1.93 A"/>
    <property type="chains" value="A=1541-1720"/>
</dbReference>
<dbReference type="PDB" id="8Y2T">
    <property type="method" value="X-ray"/>
    <property type="resolution" value="2.10 A"/>
    <property type="chains" value="A=1541-1720"/>
</dbReference>
<dbReference type="PDBsum" id="2VB0"/>
<dbReference type="PDBsum" id="2ZTX"/>
<dbReference type="PDBsum" id="2ZTY"/>
<dbReference type="PDBsum" id="2ZTZ"/>
<dbReference type="PDBsum" id="2ZU1"/>
<dbReference type="PDBsum" id="2ZU3"/>
<dbReference type="PDBsum" id="3CDU"/>
<dbReference type="PDBsum" id="3CDW"/>
<dbReference type="PDBsum" id="4WFX"/>
<dbReference type="PDBsum" id="4WFY"/>
<dbReference type="PDBsum" id="4WFZ"/>
<dbReference type="PDBsum" id="4Y2A"/>
<dbReference type="PDBsum" id="6S3A"/>
<dbReference type="PDBsum" id="6T3W"/>
<dbReference type="PDBsum" id="7LMS"/>
<dbReference type="PDBsum" id="7QUW"/>
<dbReference type="PDBsum" id="7W0Q"/>
<dbReference type="PDBsum" id="7W0S"/>
<dbReference type="PDBsum" id="7W0T"/>
<dbReference type="PDBsum" id="8S6F"/>
<dbReference type="PDBsum" id="8Y2T"/>
<dbReference type="EMDB" id="EMD-0103"/>
<dbReference type="EMDB" id="EMD-11166"/>
<dbReference type="EMDB" id="EMD-23441"/>
<dbReference type="EMDB" id="EMD-32179"/>
<dbReference type="EMDB" id="EMD-32183"/>
<dbReference type="EMDB" id="EMD-32185"/>
<dbReference type="EMDB" id="EMD-32189"/>
<dbReference type="EMDB" id="EMD-32194"/>
<dbReference type="EMDB" id="EMD-32207"/>
<dbReference type="EMDB" id="EMD-32208"/>
<dbReference type="SMR" id="P03313"/>
<dbReference type="BindingDB" id="P03313"/>
<dbReference type="ChEMBL" id="CHEMBL2396505"/>
<dbReference type="DrugCentral" id="P03313"/>
<dbReference type="MEROPS" id="C03.011"/>
<dbReference type="MEROPS" id="C03.020"/>
<dbReference type="SABIO-RK" id="P03313"/>
<dbReference type="EvolutionaryTrace" id="P03313"/>
<dbReference type="Proteomes" id="UP000007760">
    <property type="component" value="Genome"/>
</dbReference>
<dbReference type="Proteomes" id="UP000181225">
    <property type="component" value="Genome"/>
</dbReference>
<dbReference type="Proteomes" id="UP000181606">
    <property type="component" value="Genome"/>
</dbReference>
<dbReference type="GO" id="GO:0044162">
    <property type="term" value="C:host cell cytoplasmic vesicle membrane"/>
    <property type="evidence" value="ECO:0007669"/>
    <property type="project" value="UniProtKB-SubCell"/>
</dbReference>
<dbReference type="GO" id="GO:0042025">
    <property type="term" value="C:host cell nucleus"/>
    <property type="evidence" value="ECO:0000314"/>
    <property type="project" value="CACAO"/>
</dbReference>
<dbReference type="GO" id="GO:0016020">
    <property type="term" value="C:membrane"/>
    <property type="evidence" value="ECO:0007669"/>
    <property type="project" value="UniProtKB-KW"/>
</dbReference>
<dbReference type="GO" id="GO:0039618">
    <property type="term" value="C:T=pseudo3 icosahedral viral capsid"/>
    <property type="evidence" value="ECO:0007669"/>
    <property type="project" value="UniProtKB-KW"/>
</dbReference>
<dbReference type="GO" id="GO:0005524">
    <property type="term" value="F:ATP binding"/>
    <property type="evidence" value="ECO:0007669"/>
    <property type="project" value="UniProtKB-KW"/>
</dbReference>
<dbReference type="GO" id="GO:0016887">
    <property type="term" value="F:ATP hydrolysis activity"/>
    <property type="evidence" value="ECO:0007669"/>
    <property type="project" value="InterPro"/>
</dbReference>
<dbReference type="GO" id="GO:0015267">
    <property type="term" value="F:channel activity"/>
    <property type="evidence" value="ECO:0007669"/>
    <property type="project" value="UniProtKB-KW"/>
</dbReference>
<dbReference type="GO" id="GO:0004197">
    <property type="term" value="F:cysteine-type endopeptidase activity"/>
    <property type="evidence" value="ECO:0007669"/>
    <property type="project" value="UniProtKB-EC"/>
</dbReference>
<dbReference type="GO" id="GO:0003723">
    <property type="term" value="F:RNA binding"/>
    <property type="evidence" value="ECO:0007669"/>
    <property type="project" value="UniProtKB-KW"/>
</dbReference>
<dbReference type="GO" id="GO:0003724">
    <property type="term" value="F:RNA helicase activity"/>
    <property type="evidence" value="ECO:0007669"/>
    <property type="project" value="InterPro"/>
</dbReference>
<dbReference type="GO" id="GO:0003968">
    <property type="term" value="F:RNA-directed RNA polymerase activity"/>
    <property type="evidence" value="ECO:0007669"/>
    <property type="project" value="UniProtKB-KW"/>
</dbReference>
<dbReference type="GO" id="GO:0005198">
    <property type="term" value="F:structural molecule activity"/>
    <property type="evidence" value="ECO:0007669"/>
    <property type="project" value="InterPro"/>
</dbReference>
<dbReference type="GO" id="GO:0008270">
    <property type="term" value="F:zinc ion binding"/>
    <property type="evidence" value="ECO:0007669"/>
    <property type="project" value="UniProtKB-KW"/>
</dbReference>
<dbReference type="GO" id="GO:0006260">
    <property type="term" value="P:DNA replication"/>
    <property type="evidence" value="ECO:0007669"/>
    <property type="project" value="UniProtKB-KW"/>
</dbReference>
<dbReference type="GO" id="GO:0006351">
    <property type="term" value="P:DNA-templated transcription"/>
    <property type="evidence" value="ECO:0007669"/>
    <property type="project" value="InterPro"/>
</dbReference>
<dbReference type="GO" id="GO:0075509">
    <property type="term" value="P:endocytosis involved in viral entry into host cell"/>
    <property type="evidence" value="ECO:0007669"/>
    <property type="project" value="UniProtKB-KW"/>
</dbReference>
<dbReference type="GO" id="GO:0034220">
    <property type="term" value="P:monoatomic ion transmembrane transport"/>
    <property type="evidence" value="ECO:0007669"/>
    <property type="project" value="UniProtKB-KW"/>
</dbReference>
<dbReference type="GO" id="GO:0006508">
    <property type="term" value="P:proteolysis"/>
    <property type="evidence" value="ECO:0007669"/>
    <property type="project" value="UniProtKB-KW"/>
</dbReference>
<dbReference type="GO" id="GO:0044694">
    <property type="term" value="P:symbiont genome entry into host cell via pore formation in plasma membrane"/>
    <property type="evidence" value="ECO:0007669"/>
    <property type="project" value="UniProtKB-KW"/>
</dbReference>
<dbReference type="GO" id="GO:0039520">
    <property type="term" value="P:symbiont-mediated activation of host autophagy"/>
    <property type="evidence" value="ECO:0000250"/>
    <property type="project" value="UniProtKB"/>
</dbReference>
<dbReference type="GO" id="GO:0052026">
    <property type="term" value="P:symbiont-mediated perturbation of host transcription"/>
    <property type="evidence" value="ECO:0000314"/>
    <property type="project" value="BHF-UCL"/>
</dbReference>
<dbReference type="GO" id="GO:0039545">
    <property type="term" value="P:symbiont-mediated suppression of host cytoplasmic pattern recognition receptor signaling pathway via inhibition of MAVS activity"/>
    <property type="evidence" value="ECO:0007669"/>
    <property type="project" value="UniProtKB-KW"/>
</dbReference>
<dbReference type="GO" id="GO:0039554">
    <property type="term" value="P:symbiont-mediated suppression of host cytoplasmic pattern recognition receptor signaling pathway via inhibition of MDA-5 activity"/>
    <property type="evidence" value="ECO:0007669"/>
    <property type="project" value="UniProtKB-KW"/>
</dbReference>
<dbReference type="GO" id="GO:0039540">
    <property type="term" value="P:symbiont-mediated suppression of host cytoplasmic pattern recognition receptor signaling pathway via inhibition of RIG-I activity"/>
    <property type="evidence" value="ECO:0007669"/>
    <property type="project" value="UniProtKB-KW"/>
</dbReference>
<dbReference type="GO" id="GO:0039522">
    <property type="term" value="P:symbiont-mediated suppression of host mRNA export from nucleus"/>
    <property type="evidence" value="ECO:0007669"/>
    <property type="project" value="UniProtKB-KW"/>
</dbReference>
<dbReference type="GO" id="GO:0085034">
    <property type="term" value="P:symbiont-mediated suppression of host NF-kappaB cascade"/>
    <property type="evidence" value="ECO:0000314"/>
    <property type="project" value="BHF-UCL"/>
</dbReference>
<dbReference type="GO" id="GO:0039694">
    <property type="term" value="P:viral RNA genome replication"/>
    <property type="evidence" value="ECO:0007669"/>
    <property type="project" value="InterPro"/>
</dbReference>
<dbReference type="GO" id="GO:0019062">
    <property type="term" value="P:virion attachment to host cell"/>
    <property type="evidence" value="ECO:0007669"/>
    <property type="project" value="UniProtKB-KW"/>
</dbReference>
<dbReference type="CDD" id="cd23213">
    <property type="entry name" value="Enterovirus_RdRp"/>
    <property type="match status" value="1"/>
</dbReference>
<dbReference type="CDD" id="cd00205">
    <property type="entry name" value="rhv_like"/>
    <property type="match status" value="3"/>
</dbReference>
<dbReference type="FunFam" id="1.20.960.20:FF:000001">
    <property type="entry name" value="Genome polyprotein"/>
    <property type="match status" value="1"/>
</dbReference>
<dbReference type="FunFam" id="2.40.10.10:FF:000018">
    <property type="entry name" value="Genome polyprotein"/>
    <property type="match status" value="1"/>
</dbReference>
<dbReference type="FunFam" id="2.40.10.10:FF:000020">
    <property type="entry name" value="Genome polyprotein"/>
    <property type="match status" value="1"/>
</dbReference>
<dbReference type="FunFam" id="2.40.10.10:FF:000022">
    <property type="entry name" value="Genome polyprotein"/>
    <property type="match status" value="1"/>
</dbReference>
<dbReference type="FunFam" id="2.60.120.20:FF:000001">
    <property type="entry name" value="Genome polyprotein"/>
    <property type="match status" value="1"/>
</dbReference>
<dbReference type="FunFam" id="2.60.120.20:FF:000002">
    <property type="entry name" value="Genome polyprotein"/>
    <property type="match status" value="1"/>
</dbReference>
<dbReference type="FunFam" id="2.60.120.20:FF:000004">
    <property type="entry name" value="Genome polyprotein"/>
    <property type="match status" value="1"/>
</dbReference>
<dbReference type="FunFam" id="3.30.70.270:FF:000008">
    <property type="entry name" value="Genome polyprotein"/>
    <property type="match status" value="1"/>
</dbReference>
<dbReference type="FunFam" id="4.10.80.10:FF:000001">
    <property type="entry name" value="Genome polyprotein"/>
    <property type="match status" value="1"/>
</dbReference>
<dbReference type="FunFam" id="4.10.880.10:FF:000001">
    <property type="entry name" value="Genome polyprotein"/>
    <property type="match status" value="1"/>
</dbReference>
<dbReference type="FunFam" id="4.10.880.10:FF:000002">
    <property type="entry name" value="Genome polyprotein"/>
    <property type="match status" value="1"/>
</dbReference>
<dbReference type="Gene3D" id="1.20.960.20">
    <property type="match status" value="1"/>
</dbReference>
<dbReference type="Gene3D" id="2.60.120.20">
    <property type="match status" value="3"/>
</dbReference>
<dbReference type="Gene3D" id="3.30.70.270">
    <property type="match status" value="1"/>
</dbReference>
<dbReference type="Gene3D" id="4.10.80.10">
    <property type="entry name" value="Picornavirus coat protein VP4"/>
    <property type="match status" value="1"/>
</dbReference>
<dbReference type="Gene3D" id="6.10.20.20">
    <property type="entry name" value="Poliovirus 3A protein-like"/>
    <property type="match status" value="1"/>
</dbReference>
<dbReference type="Gene3D" id="4.10.880.10">
    <property type="entry name" value="Poliovirus 3D polymerase Domain 1 (Nucleotidyltransferase)"/>
    <property type="match status" value="2"/>
</dbReference>
<dbReference type="Gene3D" id="2.40.10.10">
    <property type="entry name" value="Trypsin-like serine proteases"/>
    <property type="match status" value="4"/>
</dbReference>
<dbReference type="InterPro" id="IPR003593">
    <property type="entry name" value="AAA+_ATPase"/>
</dbReference>
<dbReference type="InterPro" id="IPR043502">
    <property type="entry name" value="DNA/RNA_pol_sf"/>
</dbReference>
<dbReference type="InterPro" id="IPR000605">
    <property type="entry name" value="Helicase_SF3_ssDNA/RNA_vir"/>
</dbReference>
<dbReference type="InterPro" id="IPR014759">
    <property type="entry name" value="Helicase_SF3_ssRNA_vir"/>
</dbReference>
<dbReference type="InterPro" id="IPR027417">
    <property type="entry name" value="P-loop_NTPase"/>
</dbReference>
<dbReference type="InterPro" id="IPR014838">
    <property type="entry name" value="P3A"/>
</dbReference>
<dbReference type="InterPro" id="IPR036203">
    <property type="entry name" value="P3A_soluble_dom"/>
</dbReference>
<dbReference type="InterPro" id="IPR044067">
    <property type="entry name" value="PCV_3C_PRO"/>
</dbReference>
<dbReference type="InterPro" id="IPR000081">
    <property type="entry name" value="Peptidase_C3"/>
</dbReference>
<dbReference type="InterPro" id="IPR000199">
    <property type="entry name" value="Peptidase_C3A/C3B_picornavir"/>
</dbReference>
<dbReference type="InterPro" id="IPR009003">
    <property type="entry name" value="Peptidase_S1_PA"/>
</dbReference>
<dbReference type="InterPro" id="IPR043504">
    <property type="entry name" value="Peptidase_S1_PA_chymotrypsin"/>
</dbReference>
<dbReference type="InterPro" id="IPR003138">
    <property type="entry name" value="Pico_P1A"/>
</dbReference>
<dbReference type="InterPro" id="IPR036988">
    <property type="entry name" value="Pico_P1A_sf"/>
</dbReference>
<dbReference type="InterPro" id="IPR002527">
    <property type="entry name" value="Pico_P2B"/>
</dbReference>
<dbReference type="InterPro" id="IPR001676">
    <property type="entry name" value="Picornavirus_capsid"/>
</dbReference>
<dbReference type="InterPro" id="IPR043128">
    <property type="entry name" value="Rev_trsase/Diguanyl_cyclase"/>
</dbReference>
<dbReference type="InterPro" id="IPR033703">
    <property type="entry name" value="Rhv-like"/>
</dbReference>
<dbReference type="InterPro" id="IPR001205">
    <property type="entry name" value="RNA-dir_pol_C"/>
</dbReference>
<dbReference type="InterPro" id="IPR007094">
    <property type="entry name" value="RNA-dir_pol_PSvirus"/>
</dbReference>
<dbReference type="InterPro" id="IPR029053">
    <property type="entry name" value="Viral_coat"/>
</dbReference>
<dbReference type="Pfam" id="PF08727">
    <property type="entry name" value="P3A"/>
    <property type="match status" value="1"/>
</dbReference>
<dbReference type="Pfam" id="PF00548">
    <property type="entry name" value="Peptidase_C3"/>
    <property type="match status" value="1"/>
</dbReference>
<dbReference type="Pfam" id="PF02226">
    <property type="entry name" value="Pico_P1A"/>
    <property type="match status" value="1"/>
</dbReference>
<dbReference type="Pfam" id="PF00947">
    <property type="entry name" value="Pico_P2A"/>
    <property type="match status" value="1"/>
</dbReference>
<dbReference type="Pfam" id="PF01552">
    <property type="entry name" value="Pico_P2B"/>
    <property type="match status" value="1"/>
</dbReference>
<dbReference type="Pfam" id="PF00680">
    <property type="entry name" value="RdRP_1"/>
    <property type="match status" value="1"/>
</dbReference>
<dbReference type="Pfam" id="PF00073">
    <property type="entry name" value="Rhv"/>
    <property type="match status" value="2"/>
</dbReference>
<dbReference type="Pfam" id="PF22663">
    <property type="entry name" value="Rhv_5"/>
    <property type="match status" value="1"/>
</dbReference>
<dbReference type="Pfam" id="PF00910">
    <property type="entry name" value="RNA_helicase"/>
    <property type="match status" value="1"/>
</dbReference>
<dbReference type="SMART" id="SM00382">
    <property type="entry name" value="AAA"/>
    <property type="match status" value="1"/>
</dbReference>
<dbReference type="SUPFAM" id="SSF56672">
    <property type="entry name" value="DNA/RNA polymerases"/>
    <property type="match status" value="1"/>
</dbReference>
<dbReference type="SUPFAM" id="SSF52540">
    <property type="entry name" value="P-loop containing nucleoside triphosphate hydrolases"/>
    <property type="match status" value="1"/>
</dbReference>
<dbReference type="SUPFAM" id="SSF88633">
    <property type="entry name" value="Positive stranded ssRNA viruses"/>
    <property type="match status" value="2"/>
</dbReference>
<dbReference type="SUPFAM" id="SSF89043">
    <property type="entry name" value="Soluble domain of poliovirus core protein 3a"/>
    <property type="match status" value="1"/>
</dbReference>
<dbReference type="SUPFAM" id="SSF50494">
    <property type="entry name" value="Trypsin-like serine proteases"/>
    <property type="match status" value="2"/>
</dbReference>
<dbReference type="PROSITE" id="PS51874">
    <property type="entry name" value="PCV_3C_PRO"/>
    <property type="match status" value="1"/>
</dbReference>
<dbReference type="PROSITE" id="PS50507">
    <property type="entry name" value="RDRP_SSRNA_POS"/>
    <property type="match status" value="1"/>
</dbReference>
<dbReference type="PROSITE" id="PS51218">
    <property type="entry name" value="SF3_HELICASE_2"/>
    <property type="match status" value="1"/>
</dbReference>
<name>POLG_CXB3N</name>
<protein>
    <recommendedName>
        <fullName>Genome polyprotein</fullName>
    </recommendedName>
    <component>
        <recommendedName>
            <fullName>P1</fullName>
        </recommendedName>
    </component>
    <component>
        <recommendedName>
            <fullName>Capsid protein VP0</fullName>
        </recommendedName>
        <alternativeName>
            <fullName>VP4-VP2</fullName>
        </alternativeName>
    </component>
    <component>
        <recommendedName>
            <fullName>Capsid protein VP4</fullName>
        </recommendedName>
        <alternativeName>
            <fullName>P1A</fullName>
        </alternativeName>
        <alternativeName>
            <fullName>Virion protein 4</fullName>
        </alternativeName>
    </component>
    <component>
        <recommendedName>
            <fullName>Capsid protein VP2</fullName>
        </recommendedName>
        <alternativeName>
            <fullName>P1B</fullName>
        </alternativeName>
        <alternativeName>
            <fullName>Virion protein 2</fullName>
        </alternativeName>
    </component>
    <component>
        <recommendedName>
            <fullName>Capsid protein VP3</fullName>
        </recommendedName>
        <alternativeName>
            <fullName>P1C</fullName>
        </alternativeName>
        <alternativeName>
            <fullName>Virion protein 3</fullName>
        </alternativeName>
    </component>
    <component>
        <recommendedName>
            <fullName>Capsid protein VP1</fullName>
        </recommendedName>
        <alternativeName>
            <fullName>P1D</fullName>
        </alternativeName>
        <alternativeName>
            <fullName>Virion protein 1</fullName>
        </alternativeName>
    </component>
    <component>
        <recommendedName>
            <fullName>P2</fullName>
        </recommendedName>
    </component>
    <component>
        <recommendedName>
            <fullName>Protease 2A</fullName>
            <shortName>P2A</shortName>
            <ecNumber evidence="2">3.4.22.29</ecNumber>
        </recommendedName>
        <alternativeName>
            <fullName>Picornain 2A</fullName>
        </alternativeName>
        <alternativeName>
            <fullName>Protein 2A</fullName>
        </alternativeName>
    </component>
    <component>
        <recommendedName>
            <fullName>Protein 2B</fullName>
            <shortName>P2B</shortName>
        </recommendedName>
    </component>
    <component>
        <recommendedName>
            <fullName>Protein 2C</fullName>
            <shortName>P2C</shortName>
            <ecNumber evidence="2">3.6.1.15</ecNumber>
        </recommendedName>
    </component>
    <component>
        <recommendedName>
            <fullName>P3</fullName>
        </recommendedName>
    </component>
    <component>
        <recommendedName>
            <fullName>Protein 3AB</fullName>
        </recommendedName>
    </component>
    <component>
        <recommendedName>
            <fullName>Protein 3A</fullName>
            <shortName>P3A</shortName>
        </recommendedName>
    </component>
    <component>
        <recommendedName>
            <fullName>Viral protein genome-linked</fullName>
            <shortName>VPg</shortName>
        </recommendedName>
        <alternativeName>
            <fullName>Protein 3B</fullName>
            <shortName>P3B</shortName>
        </alternativeName>
    </component>
    <component>
        <recommendedName>
            <fullName>Protein 3CD</fullName>
            <ecNumber>3.4.22.28</ecNumber>
        </recommendedName>
    </component>
    <component>
        <recommendedName>
            <fullName evidence="11">Protease 3C</fullName>
            <ecNumber evidence="11">3.4.22.28</ecNumber>
        </recommendedName>
        <alternativeName>
            <fullName evidence="11">Picornain 3C</fullName>
            <shortName evidence="11">P3C</shortName>
        </alternativeName>
    </component>
    <component>
        <recommendedName>
            <fullName evidence="9">RNA-directed RNA polymerase</fullName>
            <shortName>RdRp</shortName>
            <ecNumber evidence="9">2.7.7.48</ecNumber>
        </recommendedName>
        <alternativeName>
            <fullName>3D polymerase</fullName>
            <shortName>3Dpol</shortName>
        </alternativeName>
        <alternativeName>
            <fullName>Protein 3D</fullName>
            <shortName>3D</shortName>
        </alternativeName>
    </component>
</protein>
<keyword id="KW-0002">3D-structure</keyword>
<keyword id="KW-1072">Activation of host autophagy by virus</keyword>
<keyword id="KW-0067">ATP-binding</keyword>
<keyword id="KW-0068">Autocatalytic cleavage</keyword>
<keyword id="KW-0167">Capsid protein</keyword>
<keyword id="KW-0191">Covalent protein-RNA linkage</keyword>
<keyword id="KW-0235">DNA replication</keyword>
<keyword id="KW-1262">Eukaryotic host gene expression shutoff by virus</keyword>
<keyword id="KW-1193">Eukaryotic host translation shutoff by virus</keyword>
<keyword id="KW-0347">Helicase</keyword>
<keyword id="KW-1035">Host cytoplasm</keyword>
<keyword id="KW-1036">Host cytoplasmic vesicle</keyword>
<keyword id="KW-1190">Host gene expression shutoff by virus</keyword>
<keyword id="KW-1043">Host membrane</keyword>
<keyword id="KW-1192">Host mRNA suppression by virus</keyword>
<keyword id="KW-1048">Host nucleus</keyword>
<keyword id="KW-0945">Host-virus interaction</keyword>
<keyword id="KW-0378">Hydrolase</keyword>
<keyword id="KW-1090">Inhibition of host innate immune response by virus</keyword>
<keyword id="KW-1097">Inhibition of host MAVS by virus</keyword>
<keyword id="KW-1089">Inhibition of host MDA5 by virus</keyword>
<keyword id="KW-1099">Inhibition of host mRNA nuclear export by virus</keyword>
<keyword id="KW-1088">Inhibition of host RIG-I by virus</keyword>
<keyword id="KW-1113">Inhibition of host RLR pathway by virus</keyword>
<keyword id="KW-0407">Ion channel</keyword>
<keyword id="KW-0406">Ion transport</keyword>
<keyword id="KW-0449">Lipoprotein</keyword>
<keyword id="KW-0460">Magnesium</keyword>
<keyword id="KW-0472">Membrane</keyword>
<keyword id="KW-0479">Metal-binding</keyword>
<keyword id="KW-0519">Myristate</keyword>
<keyword id="KW-0547">Nucleotide-binding</keyword>
<keyword id="KW-0548">Nucleotidyltransferase</keyword>
<keyword id="KW-0597">Phosphoprotein</keyword>
<keyword id="KW-1172">Pore-mediated penetration of viral genome into host cell</keyword>
<keyword id="KW-0645">Protease</keyword>
<keyword id="KW-0677">Repeat</keyword>
<keyword id="KW-0694">RNA-binding</keyword>
<keyword id="KW-0696">RNA-directed RNA polymerase</keyword>
<keyword id="KW-1143">T=pseudo3 icosahedral capsid protein</keyword>
<keyword id="KW-0788">Thiol protease</keyword>
<keyword id="KW-0808">Transferase</keyword>
<keyword id="KW-0813">Transport</keyword>
<keyword id="KW-1161">Viral attachment to host cell</keyword>
<keyword id="KW-0899">Viral immunoevasion</keyword>
<keyword id="KW-1182">Viral ion channel</keyword>
<keyword id="KW-1162">Viral penetration into host cytoplasm</keyword>
<keyword id="KW-0693">Viral RNA replication</keyword>
<keyword id="KW-0946">Virion</keyword>
<keyword id="KW-1164">Virus endocytosis by host</keyword>
<keyword id="KW-1160">Virus entry into host cell</keyword>
<keyword id="KW-0862">Zinc</keyword>
<keyword id="KW-0863">Zinc-finger</keyword>
<reference key="1">
    <citation type="journal article" date="1990" name="J. Virol.">
        <title>Complete nucleotide sequence of infectious Coxsackievirus B3 cDNA: two initial 5' uridine residues are regained during plus-strand RNA synthesis.</title>
        <authorList>
            <person name="Klump W.M."/>
            <person name="Bergmann I."/>
            <person name="Mueller B.C."/>
            <person name="Ameis D."/>
            <person name="Kandolf R."/>
        </authorList>
    </citation>
    <scope>NUCLEOTIDE SEQUENCE [GENOMIC RNA]</scope>
</reference>
<reference key="2">
    <citation type="journal article" date="1987" name="Virology">
        <title>Genome of coxsackievirus B3.</title>
        <authorList>
            <person name="Lindberg A.M."/>
            <person name="Staalhandske P.O.K."/>
            <person name="Pettersson U."/>
        </authorList>
    </citation>
    <scope>NUCLEOTIDE SEQUENCE [GENOMIC RNA]</scope>
</reference>
<reference key="3">
    <citation type="journal article" date="1984" name="J. Virol.">
        <title>Replicase gene of coxsackievirus B3.</title>
        <authorList>
            <person name="Staalhandske P.O.K."/>
            <person name="Lindberg A.M."/>
            <person name="Pettersson U."/>
        </authorList>
    </citation>
    <scope>NUCLEOTIDE SEQUENCE [GENOMIC RNA] OF 1724-2185</scope>
</reference>
<reference key="4">
    <citation type="submission" date="2012-07" db="EMBL/GenBank/DDBJ databases">
        <authorList>
            <person name="Gangaplara A."/>
            <person name="Massilamany C."/>
            <person name="Vu H."/>
            <person name="Pattnaik A.K."/>
            <person name="Reddy J."/>
        </authorList>
    </citation>
    <scope>NUCLEOTIDE SEQUENCE [LARGE SCALE GENOMIC DNA]</scope>
</reference>
<reference key="5">
    <citation type="journal article" date="1995" name="J. Virol.">
        <title>Coxsackieviruses B1, B3, and B5 use decay accelerating factor as a receptor for cell attachment.</title>
        <authorList>
            <person name="Shafren D.R."/>
            <person name="Bates R.C."/>
            <person name="Agrez M.V."/>
            <person name="Herd R.L."/>
            <person name="Burns G.F."/>
            <person name="Barry R.D."/>
        </authorList>
    </citation>
    <scope>INTERACTION WITH HOST CD55 (CAPSID PROTEIN VP1)</scope>
    <scope>FUNCTION (CAPSID PROTEIN VP1)</scope>
</reference>
<reference key="6">
    <citation type="journal article" date="2000" name="Virology">
        <title>The coxsackie-adenovirus receptor (CAR) is used by reference strains and clinical isolates representing all six serotypes of coxsackievirus group B and by swine vesicular disease virus.</title>
        <authorList>
            <person name="Martino T.A."/>
            <person name="Petric M."/>
            <person name="Weingartl H."/>
            <person name="Bergelson J.M."/>
            <person name="Opavsky M.A."/>
            <person name="Richardson C.D."/>
            <person name="Modlin J.F."/>
            <person name="Finberg R.W."/>
            <person name="Kain K.C."/>
            <person name="Willis N."/>
            <person name="Gauntt C.J."/>
            <person name="Liu P.P."/>
        </authorList>
    </citation>
    <scope>INTERACTION WITH HOST CXADR (CAPSID PROTEIN VP1)</scope>
    <scope>FUNCTION (CAPSID PROTEIN VP1)</scope>
</reference>
<reference key="7">
    <citation type="journal article" date="2002" name="Nucleic Acids Res.">
        <title>La autoantigen is required for the internal ribosome entry site-mediated translation of Coxsackievirus B3 RNA.</title>
        <authorList>
            <person name="Ray P.S."/>
            <person name="Das S."/>
        </authorList>
    </citation>
    <scope>INDUCTION</scope>
</reference>
<reference key="8">
    <citation type="journal article" date="2006" name="J. Virol.">
        <title>Effects of picornavirus 3A Proteins on Protein Transport and GBF1-dependent COP-I recruitment.</title>
        <authorList>
            <person name="Wessels E."/>
            <person name="Duijsings D."/>
            <person name="Lanke K.H."/>
            <person name="van Dooren S.H."/>
            <person name="Jackson C.L."/>
            <person name="Melchers W.J."/>
            <person name="van Kuppeveld F.J."/>
        </authorList>
    </citation>
    <scope>FUNCTION (PROTEIN 3A)</scope>
    <scope>INTERACTION WITH HOST GBF1 (PROTEIN 3A)</scope>
</reference>
<reference key="9">
    <citation type="journal article" date="2008" name="Virology">
        <title>Cleavage of eukaryotic initiation factor eIF5B by enterovirus 3C proteases.</title>
        <authorList>
            <person name="de Breyne S."/>
            <person name="Bonderoff J.M."/>
            <person name="Chumakov K.M."/>
            <person name="Lloyd R.E."/>
            <person name="Hellen C.U."/>
        </authorList>
    </citation>
    <scope>FUNCTION (PROTEASE 3C)</scope>
</reference>
<reference key="10">
    <citation type="journal article" date="2011" name="PLoS Pathog.">
        <title>The coxsackievirus B 3C protease cleaves MAVS and TRIF to attenuate host type I interferon and apoptotic signaling.</title>
        <authorList>
            <person name="Mukherjee A."/>
            <person name="Morosky S.A."/>
            <person name="Delorme-Axford E."/>
            <person name="Dybdahl-Sissoko N."/>
            <person name="Oberste M.S."/>
            <person name="Wang T."/>
            <person name="Coyne C.B."/>
        </authorList>
    </citation>
    <scope>FUNCTION (PROTEASE 3C)</scope>
    <scope>INTERACTION WITH HOST TICAM1 (PROTEASE 3C)</scope>
</reference>
<reference key="11">
    <citation type="journal article" date="2012" name="J. Virol.">
        <title>The 3A protein from multiple picornaviruses utilizes the golgi adaptor protein ACBD3 to recruit PI4KIIIbeta.</title>
        <authorList>
            <person name="Greninger A.L."/>
            <person name="Knudsen G.M."/>
            <person name="Betegon M."/>
            <person name="Burlingame A.L."/>
            <person name="Derisi J.L."/>
        </authorList>
    </citation>
    <scope>INTERACTION WITH HOST ACBD3 (PROTEIN 3A)</scope>
</reference>
<reference key="12">
    <citation type="journal article" date="2013" name="PLoS ONE">
        <title>Structures of coxsackievirus, rhinovirus, and poliovirus polymerase elongation complexes solved by engineering RNA mediated crystal contacts.</title>
        <authorList>
            <person name="Gong P."/>
            <person name="Kortus M.G."/>
            <person name="Nix J.C."/>
            <person name="Davis R.E."/>
            <person name="Peersen O.B."/>
        </authorList>
    </citation>
    <scope>COFACTOR</scope>
</reference>
<reference key="13">
    <citation type="journal article" date="2014" name="J. Virol.">
        <title>Enterovirus 2Apro targets MDA5 and MAVS in infected cells.</title>
        <authorList>
            <person name="Feng Q."/>
            <person name="Langereis M.A."/>
            <person name="Lork M."/>
            <person name="Nguyen M."/>
            <person name="Hato S.V."/>
            <person name="Lanke K."/>
            <person name="Emdad L."/>
            <person name="Bhoopathi P."/>
            <person name="Fisher P.B."/>
            <person name="Lloyd R.E."/>
            <person name="van Kuppeveld F.J."/>
        </authorList>
    </citation>
    <scope>FUNCTION (PROTEASE 2A)</scope>
    <scope>FUNCTION (PROTEASE 3C)</scope>
    <scope>MUTAGENESIS OF CYS-1687</scope>
</reference>
<reference key="14">
    <citation type="journal article" date="2019" name="MBio">
        <title>ACBD3 is an essential pan-enterovirus host factor that mediates the interaction between viral 3A protein and cellular protein PI4KB.</title>
        <authorList>
            <person name="Lyoo H."/>
            <person name="van der Schaar H.M."/>
            <person name="Dorobantu C.M."/>
            <person name="Rabouw H.H."/>
            <person name="Strating J.R.P.M."/>
            <person name="van Kuppeveld F.J.M."/>
        </authorList>
    </citation>
    <scope>FUNCTION (PROTEIN 3A)</scope>
</reference>
<reference key="15">
    <citation type="journal article" date="2019" name="PLoS Pathog.">
        <title>Convergent evolution in the mechanisms of ACBD3 recruitment to picornavirus replication sites.</title>
        <authorList>
            <person name="Horova V."/>
            <person name="Lyoo H."/>
            <person name="Rozycki B."/>
            <person name="Chalupska D."/>
            <person name="Smola M."/>
            <person name="Humpolickova J."/>
            <person name="Strating J.R.P.M."/>
            <person name="van Kuppeveld F.J.M."/>
            <person name="Boura E."/>
            <person name="Klima M."/>
        </authorList>
    </citation>
    <scope>INTERACTION WITH HOST ACBD3 (PROTEIN 3A)</scope>
    <scope>FUNCTION (PROTEIN 3A)</scope>
</reference>
<reference key="16">
    <citation type="journal article" date="2019" name="J. Virol.">
        <title>Essential Role of Enterovirus 2A Protease in Counteracting Stress Granule Formation and the Induction of Type I Interferon.</title>
        <authorList>
            <person name="Visser L.J."/>
            <person name="Langereis M.A."/>
            <person name="Rabouw H.H."/>
            <person name="Wahedi M."/>
            <person name="Muntjewerff E.M."/>
            <person name="de Groot R.J."/>
            <person name="van Kuppeveld F.J.M."/>
        </authorList>
    </citation>
    <scope>FUNCTION (PROTEASE 2A)</scope>
</reference>
<reference key="17">
    <citation type="journal article" date="2021" name="Elife">
        <title>Diverse viral proteases activate the NLRP1 inflammasome.</title>
        <authorList>
            <person name="Tsu B.V."/>
            <person name="Beierschmitt C."/>
            <person name="Ryan A.P."/>
            <person name="Agarwal R."/>
            <person name="Mitchell P.S."/>
            <person name="Daugherty M.D."/>
        </authorList>
    </citation>
    <scope>FUNCTION (PROTEASE 3C)</scope>
</reference>
<reference key="18">
    <citation type="journal article" date="2021" name="Autophagy">
        <title>Coxsackievirus B3 targets TFEB to disrupt lysosomal function.</title>
        <authorList>
            <person name="Mohamud Y."/>
            <person name="Tang H."/>
            <person name="Xue Y.C."/>
            <person name="Liu H."/>
            <person name="Ng C.S."/>
            <person name="Bahreyni A."/>
            <person name="Luo H."/>
        </authorList>
    </citation>
    <scope>FUNCTION (PROTEASE 3C)</scope>
</reference>
<reference key="19">
    <citation type="journal article" date="2006" name="Adv. Exp. Med. Biol.">
        <title>Structure and dynamics of SARS coronavirus main proteinase (Mpro).</title>
        <authorList>
            <person name="Hilgenfeld R."/>
            <person name="Anand K."/>
            <person name="Mesters J.R."/>
            <person name="Rao Z."/>
            <person name="Shen X."/>
            <person name="Jiang H."/>
            <person name="Tan J."/>
            <person name="Verschueren K.H."/>
        </authorList>
    </citation>
    <scope>X-RAY CRYSTALLOGRAPHY (2.40 ANGSTROMS) OF 1541-1723</scope>
</reference>
<reference key="20">
    <citation type="journal article" date="2008" name="J. Virol.">
        <title>The crystal structure of coxsackievirus B3 RNA-dependent RNA polymerase in complex with its protein primer VPg confirms the existence of a second VPg binding site on Picornaviridae polymerases.</title>
        <authorList>
            <person name="Gruez A."/>
            <person name="Selisko B."/>
            <person name="Roberts M."/>
            <person name="Bricogne G."/>
            <person name="Bussetta C."/>
            <person name="Jabafi I."/>
            <person name="Coutard B."/>
            <person name="De Palma A.M."/>
            <person name="Neyts J."/>
            <person name="Canard B."/>
        </authorList>
    </citation>
    <scope>X-RAY CRYSTALLOGRAPHY (2.10 ANGSTROMS) OF 1724-2185 IN COMPLEX WITH VPG; GTP AND DUTP</scope>
    <scope>INTERACTION OF RNA-DIRECTED RNA POLYMERASE WITH VPG</scope>
    <scope>COFACTOR</scope>
    <scope>FUNCTION (RNA-DIRECTED RNA POLYMERASE)</scope>
</reference>
<reference key="21">
    <citation type="journal article" date="2009" name="J. Biol. Chem.">
        <title>Structural basis of inhibition specificities of 3C and 3C-like proteases by zinc-coordinating and peptidomimetic compounds.</title>
        <authorList>
            <person name="Lee C.C."/>
            <person name="Kuo C.J."/>
            <person name="Ko T.P."/>
            <person name="Hsu M.F."/>
            <person name="Tsui Y.C."/>
            <person name="Chang S.C."/>
            <person name="Yang S."/>
            <person name="Chen S.J."/>
            <person name="Chen H.C."/>
            <person name="Hsu M.C."/>
            <person name="Shih S.R."/>
            <person name="Liang P.H."/>
            <person name="Wang A.H."/>
        </authorList>
    </citation>
    <scope>X-RAY CRYSTALLOGRAPHY (1.38 ANGSTROMS) OF 1541-1723</scope>
</reference>
<reference key="22">
    <citation type="journal article" date="2015" name="J. Virol.">
        <title>Structure-function relationships underlying the replication fidelity of viral RNA-dependent RNA polymerases.</title>
        <authorList>
            <person name="Campagnola G."/>
            <person name="McDonald S."/>
            <person name="Beaucourt S."/>
            <person name="Vignuzzi M."/>
            <person name="Peersen O.B."/>
        </authorList>
    </citation>
    <scope>X-RAY CRYSTALLOGRAPHY (1.80 ANGSTROMS) OF 1724-2185</scope>
</reference>
<reference key="23">
    <citation type="journal article" date="2015" name="PLoS Pathog.">
        <title>The RNA template channel of the RNA-dependent RNA polymerase as a target for development of antiviral therapy of multiple genera within a virus family.</title>
        <authorList>
            <person name="van der Linden L."/>
            <person name="Vives-Adrian L."/>
            <person name="Selisko B."/>
            <person name="Ferrer-Orta C."/>
            <person name="Liu X."/>
            <person name="Lanke K."/>
            <person name="Ulferts R."/>
            <person name="De Palma A.M."/>
            <person name="Tanchis F."/>
            <person name="Goris N."/>
            <person name="Lefebvre D."/>
            <person name="De Clercq K."/>
            <person name="Leyssen P."/>
            <person name="Lacroix C."/>
            <person name="Purstinger G."/>
            <person name="Coutard B."/>
            <person name="Canard B."/>
            <person name="Boehr D.D."/>
            <person name="Arnold J.J."/>
            <person name="Cameron C.E."/>
            <person name="Verdaguer N."/>
            <person name="Neyts J."/>
            <person name="van Kuppeveld F.J."/>
        </authorList>
    </citation>
    <scope>X-RAY CRYSTALLOGRAPHY (2.90 ANGSTROMS) OF 1724-2185</scope>
</reference>
<proteinExistence type="evidence at protein level"/>
<accession>P03313</accession>
<accession>J9WSZ6</accession>
<accession>Q66322</accession>
<accession>Q66323</accession>
<accession>Q66324</accession>
<accession>Q66325</accession>
<accession>Q66326</accession>
<accession>Q66327</accession>
<accession>Q66328</accession>
<accession>Q83744</accession>
<comment type="function">
    <molecule>Capsid protein VP1</molecule>
    <text evidence="2 24 28">Forms an icosahedral capsid of pseudo T=3 symmetry with capsid proteins VP2 and VP3 (By similarity). The capsid is 300 Angstroms in diameter, composed of 60 copies of each capsid protein and enclosing the viral positive strand RNA genome (By similarity). Capsid protein VP1 mainly forms the vertices of the capsid (By similarity). Capsid protein VP1 interacts with host CD55 and CXADR to provide virion attachment to target host cells (Probable). This attachment induces virion internalization (By similarity). Tyrosine kinases are probably involved in the entry process (By similarity). After binding to its receptor, the capsid undergoes conformational changes (By similarity). Capsid protein VP1 N-terminus (that contains an amphipathic alpha-helix) and capsid protein VP4 are externalized (By similarity). Together, they shape a pore in the host membrane through which viral genome is translocated to host cell cytoplasm (By similarity).</text>
</comment>
<comment type="function">
    <molecule>Capsid protein VP2</molecule>
    <text evidence="2">Forms an icosahedral capsid of pseudo T=3 symmetry with capsid proteins VP2 and VP3 (By similarity). The capsid is 300 Angstroms in diameter, composed of 60 copies of each capsid protein and enclosing the viral positive strand RNA genome (By similarity).</text>
</comment>
<comment type="function">
    <molecule>Capsid protein VP3</molecule>
    <text evidence="2">Forms an icosahedral capsid of pseudo T=3 symmetry with capsid proteins VP2 and VP3 (By similarity). The capsid is 300 Angstroms in diameter, composed of 60 copies of each capsid protein and enclosing the viral positive strand RNA genome (By similarity).</text>
</comment>
<comment type="function">
    <molecule>Capsid protein VP4</molecule>
    <text evidence="2">Lies on the inner surface of the capsid shell (By similarity). After binding to the host receptor, the capsid undergoes conformational changes (By similarity). Capsid protein VP4 is released, Capsid protein VP1 N-terminus is externalized, and together, they shape a pore in the host membrane through which the viral genome is translocated into the host cell cytoplasm (By similarity).</text>
</comment>
<comment type="function">
    <molecule>Capsid protein VP0</molecule>
    <text evidence="2">Component of immature procapsids, which is cleaved into capsid proteins VP4 and VP2 after maturation (By similarity). Allows the capsid to remain inactive before the maturation step (By similarity).</text>
</comment>
<comment type="function">
    <molecule>Protease 2A</molecule>
    <text evidence="2 18 19">Cysteine protease that cleaves viral polyprotein and specific host proteins (By similarity). It is responsible for the autocatalytic cleavage between the P1 and P2 regions, which is the first cleavage occurring in the polyprotein (By similarity). Also cleaves the host translation initiation factor EIF4G1, in order to shut down the capped cellular mRNA translation (By similarity). Inhibits the host nucleus-cytoplasm protein and RNA trafficking by cleaving host members of the nuclear pores (By similarity). Counteracts stress granule formation probably by antagonizing its assembly or promoting its dissassembly (PubMed:30867299). Cleaves and inhibits host IFIH1/MDA5, thereby inhibiting the type-I IFN production and the establishment of the antiviral state (PubMed:24390337). Cleaves and inhibits host MAVS, thereby inhibiting the type-I IFN production and the establishment of the antiviral state (PubMed:24390337).</text>
</comment>
<comment type="function">
    <molecule>Protein 2B</molecule>
    <text evidence="2">Plays an essential role in the virus replication cycle by acting as a viroporin. Creates a pore in the host endoplasmic reticulum and as a consequence releases Ca2+ in the cytoplasm of infected cell. In turn, high levels of cytoplasmic calcium may trigger membrane trafficking and transport of viral ER-associated proteins to viroplasms, sites of viral genome replication.</text>
</comment>
<comment type="function">
    <molecule>Protein 2C</molecule>
    <text evidence="2">Induces and associates with structural rearrangements of intracellular membranes. Displays RNA-binding, nucleotide binding and NTPase activities. May play a role in virion morphogenesis and viral RNA encapsidation by interacting with the capsid protein VP3.</text>
</comment>
<comment type="function">
    <molecule>Protein 3AB</molecule>
    <text evidence="2">Localizes the viral replication complex to the surface of membranous vesicles. Together with protein 3CD binds the Cis-Active RNA Element (CRE) which is involved in RNA synthesis initiation. Acts as a cofactor to stimulate the activity of 3D polymerase, maybe through a nucleid acid chaperone activity.</text>
</comment>
<comment type="function">
    <molecule>Protein 3A</molecule>
    <text evidence="2 12 26 27">Localizes the viral replication complex to the surface of membranous vesicles (By similarity). It inhibits host cell endoplasmic reticulum-to-Golgi apparatus transport and causes the disassembly of the Golgi complex, possibly through GBF1 interaction (PubMed:17005635). This would result in depletion of MHC, trail receptors and IFN receptors at the host cell surface (PubMed:17005635). Plays an essential role in viral RNA replication by recruiting ACBD3 and PI4KB at the viral replication sites, thereby allowing the formation of the rearranged membranous structures where viral replication takes place (Probable).</text>
</comment>
<comment type="function">
    <molecule>Viral protein genome-linked</molecule>
    <text evidence="2">Acts as a primer for viral RNA replication and remains covalently bound to viral genomic RNA. VPg is uridylylated prior to priming replication into VPg-pUpU. The oriI viral genomic sequence may act as a template for this. The VPg-pUpU is then used as primer on the genomic RNA poly(A) by the RNA-dependent RNA polymerase to replicate the viral genome. During genome replication, the VPg-RNA linkage is removed by the host TDP2, thereby accelerating replication. During the late stage of the replication cycle, host TDP2 is excluded from sites of viral RNA synthesis and encapsidation, allowing for the generation of progeny virions.</text>
</comment>
<comment type="function">
    <molecule>Protein 3CD</molecule>
    <text evidence="2">Involved in the viral replication complex and viral polypeptide maturation. It exhibits protease activity with a specificity and catalytic efficiency that is different from protease 3C. Protein 3CD lacks polymerase activity. Protein 3CD binds to the 5'UTR of the viral genome.</text>
</comment>
<comment type="function">
    <molecule>Protease 3C</molecule>
    <text evidence="2 4 13 15 18 21 22">Major viral protease that mediates proteolytic processing of the polyprotein (By similarity). Cleaves host EIF5B, contributing to host translation shutoff (PubMed:18572216). Cleaves also host PABPC1, contributing to host translation shutoff (By similarity). Cleaves and inhibits host RIGI, thereby inhibiting the type-I IFN production and the establishment of the antiviral state (PubMed:24390337). Cleaves and inhibits host MAVS, thereby inhibiting the type-I IFN production and the establishment of the antiviral state (PubMed:21436888). Cleaves and inhibits host TICAM1/TRIF, thereby inhibiting the type-I IFN production (PubMed:21436888). Cleaves host NLRP1, triggers host N-glycine-mediated degradation of the autoinhibitory NLRP1 N-terminal fragment (PubMed:33410748). Cleaves host transcription factor TFEB, thereby disrupting host lysosomal functions and enhancing viral infection (PubMed:33691586).</text>
</comment>
<comment type="function">
    <molecule>RNA-directed RNA polymerase</molecule>
    <text evidence="2">Replicates the viral genomic RNA on the surface of intracellular membranes. May form linear arrays of subunits that propagate along a strong head-to-tail interaction called interface-I. Covalently attaches UMP to a tyrosine of VPg, which is used to prime RNA synthesis. The positive stranded RNA genome is first replicated at virus induced membranous vesicles, creating a dsRNA genomic replication form. This dsRNA is then used as template to synthesize positive stranded RNA genomes. ss(+)RNA genomes are either translated, replicated or encapsidated.</text>
</comment>
<comment type="catalytic activity">
    <molecule>Protein 2C</molecule>
    <reaction evidence="2">
        <text>a ribonucleoside 5'-triphosphate + H2O = a ribonucleoside 5'-diphosphate + phosphate + H(+)</text>
        <dbReference type="Rhea" id="RHEA:23680"/>
        <dbReference type="ChEBI" id="CHEBI:15377"/>
        <dbReference type="ChEBI" id="CHEBI:15378"/>
        <dbReference type="ChEBI" id="CHEBI:43474"/>
        <dbReference type="ChEBI" id="CHEBI:57930"/>
        <dbReference type="ChEBI" id="CHEBI:61557"/>
        <dbReference type="EC" id="3.6.1.15"/>
    </reaction>
</comment>
<comment type="catalytic activity">
    <molecule>Protease 2A</molecule>
    <reaction evidence="2">
        <text>Selective cleavage of Tyr-|-Gly bond in the picornavirus polyprotein.</text>
        <dbReference type="EC" id="3.4.22.29"/>
    </reaction>
</comment>
<comment type="catalytic activity">
    <molecule>RNA-directed RNA polymerase</molecule>
    <reaction evidence="9">
        <text>RNA(n) + a ribonucleoside 5'-triphosphate = RNA(n+1) + diphosphate</text>
        <dbReference type="Rhea" id="RHEA:21248"/>
        <dbReference type="Rhea" id="RHEA-COMP:14527"/>
        <dbReference type="Rhea" id="RHEA-COMP:17342"/>
        <dbReference type="ChEBI" id="CHEBI:33019"/>
        <dbReference type="ChEBI" id="CHEBI:61557"/>
        <dbReference type="ChEBI" id="CHEBI:140395"/>
        <dbReference type="EC" id="2.7.7.48"/>
    </reaction>
</comment>
<comment type="catalytic activity">
    <molecule>Protease 3C</molecule>
    <reaction evidence="11">
        <text>Selective cleavage of Gln-|-Gly bond in the poliovirus polyprotein. In other picornavirus reactions Glu may be substituted for Gln, and Ser or Thr for Gly.</text>
        <dbReference type="EC" id="3.4.22.28"/>
    </reaction>
</comment>
<comment type="cofactor">
    <molecule>RNA-directed RNA polymerase</molecule>
    <cofactor evidence="14 17">
        <name>Mg(2+)</name>
        <dbReference type="ChEBI" id="CHEBI:18420"/>
    </cofactor>
    <text evidence="2 14">Binds 2 magnesium ions that constitute a dinuclear catalytic metal center (By similarity). The magnesium ions are not prebound but only present for catalysis (By similarity). Requires the presence of 3CDpro or 3CPro (PubMed:18632861).</text>
</comment>
<comment type="activity regulation">
    <molecule>RNA-directed RNA polymerase</molecule>
    <text evidence="2">Replication or transcription is subject to high level of random mutations by the nucleotide analog ribavirin.</text>
</comment>
<comment type="subunit">
    <molecule>Capsid protein VP0</molecule>
    <text evidence="2">Interacts with capsid protein VP1 and capsid protein VP3 to form heterotrimeric protomers.</text>
</comment>
<comment type="subunit">
    <molecule>Capsid protein VP1</molecule>
    <text evidence="2 24 28">Interacts with capsid protein VP0, and capsid protein VP3 to form heterotrimeric protomers (By similarity). Five protomers subsequently associate to form pentamers which serve as building blocks for the capsid (By similarity). Interacts with capsid protein VP2, capsid protein VP3 and capsid protein VP4 following cleavage of capsid protein VP0 (By similarity). Interacts with host CD55 (Probable). Interacts with host CXADR (Probable).</text>
</comment>
<comment type="subunit">
    <molecule>Capsid protein VP2</molecule>
    <text evidence="2">Interacts with capsid protein VP1 and capsid protein VP3 in the mature capsid.</text>
</comment>
<comment type="subunit">
    <molecule>Capsid protein VP3</molecule>
    <text evidence="2">Interacts with capsid protein VP0 and capsid protein VP1 to form heterotrimeric protomers (By similarity). Five protomers subsequently associate to form pentamers which serve as building blocks for the capsid (By similarity). Interacts with capsid protein VP4 in the mature capsid (By similarity). Interacts with protein 2C; this interaction may be important for virion morphogenesis (By similarity).</text>
</comment>
<comment type="subunit">
    <molecule>Capsid protein VP4</molecule>
    <text evidence="2">Interacts with capsid protein VP1 and capsid protein VP3.</text>
</comment>
<comment type="subunit">
    <molecule>Protease 2A</molecule>
    <text evidence="5">Homodimer.</text>
</comment>
<comment type="subunit">
    <molecule>Protein 2C</molecule>
    <text evidence="2">Homohexamer; forms a hexameric ring structure with 6-fold symmetry characteristic of AAA+ ATPases (By similarity). Interacts (via N-terminus) with host RTN3 (via reticulon domain); this interaction is important for viral replication (By similarity). Interacts with capsid protein VP3; this interaction may be important for virion morphogenesis (By similarity).</text>
</comment>
<comment type="subunit">
    <molecule>Protein 3AB</molecule>
    <text evidence="2">Interacts with protein 3CD.</text>
</comment>
<comment type="subunit">
    <molecule>Protein 3A</molecule>
    <text evidence="2 12 16 20">Homodimer (By similarity). Interacts with host GBF1 (PubMed:17005635). Interacts (via GOLD domain) with host ACBD3 (via GOLD domain); this interaction allows the formation of a viral protein 3A/ACBD3 heterotetramer with a 2:2 stoichiometry, which will stimulate the recruitment of host PI4KB in order to synthesize PI4P at the viral RNA replication sites (PubMed:22258260, PubMed:31381608).</text>
</comment>
<comment type="subunit">
    <molecule>Viral protein genome-linked</molecule>
    <text evidence="2">Interacts with RNA-directed RNA polymerase.</text>
</comment>
<comment type="subunit">
    <molecule>Protease 3C</molecule>
    <text evidence="15">Interacts with host TICAM1 (via C-terminus).</text>
</comment>
<comment type="subunit">
    <molecule>Protein 3CD</molecule>
    <text evidence="2">Interacts with protein 3AB and with RNA-directed RNA polymerase.</text>
</comment>
<comment type="subunit">
    <molecule>RNA-directed RNA polymerase</molecule>
    <text evidence="2">Interacts with Viral protein genome-linked and with protein 3CD.</text>
</comment>
<comment type="subcellular location">
    <molecule>Capsid protein VP0</molecule>
    <subcellularLocation>
        <location>Virion</location>
    </subcellularLocation>
    <subcellularLocation>
        <location evidence="23">Host cytoplasm</location>
    </subcellularLocation>
</comment>
<comment type="subcellular location">
    <molecule>Capsid protein VP4</molecule>
    <subcellularLocation>
        <location>Virion</location>
    </subcellularLocation>
</comment>
<comment type="subcellular location">
    <molecule>Capsid protein VP2</molecule>
    <subcellularLocation>
        <location evidence="2">Virion</location>
    </subcellularLocation>
    <subcellularLocation>
        <location evidence="23">Host cytoplasm</location>
    </subcellularLocation>
</comment>
<comment type="subcellular location">
    <molecule>Capsid protein VP3</molecule>
    <subcellularLocation>
        <location evidence="2">Virion</location>
    </subcellularLocation>
    <subcellularLocation>
        <location evidence="23">Host cytoplasm</location>
    </subcellularLocation>
</comment>
<comment type="subcellular location">
    <molecule>Capsid protein VP1</molecule>
    <subcellularLocation>
        <location evidence="2">Virion</location>
    </subcellularLocation>
    <subcellularLocation>
        <location evidence="23">Host cytoplasm</location>
    </subcellularLocation>
</comment>
<comment type="subcellular location">
    <molecule>Protein 2B</molecule>
    <subcellularLocation>
        <location evidence="23">Host cytoplasmic vesicle membrane</location>
        <topology evidence="23">Peripheral membrane protein</topology>
        <orientation evidence="23">Cytoplasmic side</orientation>
    </subcellularLocation>
    <text>Probably localizes to the surface of intracellular membrane vesicles that are induced after virus infection as the site for viral RNA replication. These vesicles are derived from the endoplasmic reticulum.</text>
</comment>
<comment type="subcellular location">
    <molecule>Protein 2C</molecule>
    <subcellularLocation>
        <location evidence="23">Host cytoplasmic vesicle membrane</location>
        <topology evidence="23">Peripheral membrane protein</topology>
        <orientation evidence="23">Cytoplasmic side</orientation>
    </subcellularLocation>
    <text>Probably localizes to the surface of intracellular membrane vesicles that are induced after virus infection as the site for viral RNA replication. These vesicles are derived from the endoplasmic reticulum.</text>
</comment>
<comment type="subcellular location">
    <molecule>Protein 3A</molecule>
    <subcellularLocation>
        <location evidence="23">Host cytoplasmic vesicle membrane</location>
        <topology evidence="23">Peripheral membrane protein</topology>
        <orientation evidence="23">Cytoplasmic side</orientation>
    </subcellularLocation>
    <text>Probably localizes to the surface of intracellular membrane vesicles that are induced after virus infection as the site for viral RNA replication. These vesicles are derived from the endoplasmic reticulum.</text>
</comment>
<comment type="subcellular location">
    <molecule>Protein 3AB</molecule>
    <subcellularLocation>
        <location evidence="23">Host cytoplasmic vesicle membrane</location>
        <topology evidence="23">Peripheral membrane protein</topology>
        <orientation evidence="23">Cytoplasmic side</orientation>
    </subcellularLocation>
    <text>Probably localizes to the surface of intracellular membrane vesicles that are induced after virus infection as the site for viral RNA replication. These vesicles are derived from the endoplasmic reticulum.</text>
</comment>
<comment type="subcellular location">
    <molecule>Viral protein genome-linked</molecule>
    <subcellularLocation>
        <location evidence="2">Virion</location>
    </subcellularLocation>
    <subcellularLocation>
        <location evidence="6">Host cytoplasm</location>
    </subcellularLocation>
</comment>
<comment type="subcellular location">
    <molecule>Protease 3C</molecule>
    <subcellularLocation>
        <location>Host cytoplasm</location>
    </subcellularLocation>
</comment>
<comment type="subcellular location">
    <molecule>Protein 3CD</molecule>
    <subcellularLocation>
        <location evidence="2">Host nucleus</location>
    </subcellularLocation>
    <subcellularLocation>
        <location evidence="2">Host cytoplasm</location>
    </subcellularLocation>
    <subcellularLocation>
        <location evidence="23">Host cytoplasmic vesicle membrane</location>
        <topology evidence="23">Peripheral membrane protein</topology>
        <orientation evidence="23">Cytoplasmic side</orientation>
    </subcellularLocation>
    <text>Probably localizes to the surface of intracellular membrane vesicles that are induced after virus infection as the site for viral RNA replication. These vesicles are derived from the endoplasmic reticulum.</text>
</comment>
<comment type="subcellular location">
    <molecule>RNA-directed RNA polymerase</molecule>
    <subcellularLocation>
        <location evidence="23">Host cytoplasmic vesicle membrane</location>
        <topology evidence="23">Peripheral membrane protein</topology>
        <orientation evidence="23">Cytoplasmic side</orientation>
    </subcellularLocation>
    <text>Probably localizes to the surface of intracellular membrane vesicles that are induced after virus infection as the site for viral RNA replication. These vesicles are derived from the endoplasmic reticulum.</text>
</comment>
<comment type="domain">
    <molecule>Protein 2C</molecule>
    <text evidence="1 2">The N-terminus has membrane-binding (By similarity). The N-terminus also displays RNA-binding properties (By similarity). The N-terminus is involved in oligomerization (By similarity). The central part contains an ATPase domain and a degenerate C4-type zinc-finger with only 3 cysteines (By similarity). The C-terminus is involved in RNA-binding (By similarity). The extreme C-terminus contains a region involved in oligomerization (By similarity).</text>
</comment>
<comment type="PTM">
    <molecule>Genome polyprotein</molecule>
    <text evidence="2">Specific enzymatic cleavages in vivo by the viral proteases yield processing intermediates and the mature proteins.</text>
</comment>
<comment type="PTM">
    <molecule>Capsid protein VP0</molecule>
    <text evidence="2">Myristoylation is required for the formation of pentamers during virus assembly. Further assembly of 12 pentamers and a molecule of genomic RNA generates the provirion.</text>
</comment>
<comment type="PTM">
    <molecule>Capsid protein VP0</molecule>
    <text evidence="2">During virion maturation, immature virions are rendered infectious following cleavage of VP0 into VP4 and VP2. This maturation seems to be an autocatalytic event triggered by the presence of RNA in the capsid and it is followed by a conformational change infectious virion.</text>
</comment>
<comment type="PTM">
    <molecule>Capsid protein VP4</molecule>
    <text evidence="2">Myristoylation is required during RNA encapsidation and formation of the mature virus particle.</text>
</comment>
<comment type="PTM">
    <molecule>Viral protein genome-linked</molecule>
    <text evidence="2">VPg is uridylylated by the polymerase into VPg-pUpU. This acts as a nucleotide-peptide primer for the genomic RNA replication.</text>
</comment>
<comment type="similarity">
    <text evidence="23">Belongs to the picornaviruses polyprotein family.</text>
</comment>
<organism>
    <name type="scientific">Coxsackievirus B3 (strain Nancy)</name>
    <dbReference type="NCBI Taxonomy" id="103903"/>
    <lineage>
        <taxon>Viruses</taxon>
        <taxon>Riboviria</taxon>
        <taxon>Orthornavirae</taxon>
        <taxon>Pisuviricota</taxon>
        <taxon>Pisoniviricetes</taxon>
        <taxon>Picornavirales</taxon>
        <taxon>Picornaviridae</taxon>
        <taxon>Ensavirinae</taxon>
        <taxon>Enterovirus</taxon>
        <taxon>Enterovirus B</taxon>
    </lineage>
</organism>
<feature type="initiator methionine" description="Removed; by host" evidence="2">
    <location>
        <position position="1"/>
    </location>
</feature>
<feature type="chain" id="PRO_0000426266" description="Genome polyprotein">
    <location>
        <begin position="2"/>
        <end position="2185"/>
    </location>
</feature>
<feature type="chain" id="PRO_0000426267" description="P1">
    <location>
        <begin position="2"/>
        <end position="851"/>
    </location>
</feature>
<feature type="chain" id="PRO_0000426268" description="Capsid protein VP0">
    <location>
        <begin position="2"/>
        <end position="332"/>
    </location>
</feature>
<feature type="chain" id="PRO_0000426269" description="Capsid protein VP4">
    <location>
        <begin position="2"/>
        <end position="69"/>
    </location>
</feature>
<feature type="chain" id="PRO_0000426270" description="Capsid protein VP2">
    <location>
        <begin position="70"/>
        <end position="332"/>
    </location>
</feature>
<feature type="chain" id="PRO_0000426271" description="Capsid protein VP3">
    <location>
        <begin position="333"/>
        <end position="570"/>
    </location>
</feature>
<feature type="chain" id="PRO_0000426272" description="Capsid protein VP1">
    <location>
        <begin position="571"/>
        <end position="851"/>
    </location>
</feature>
<feature type="chain" id="PRO_0000426273" description="P2">
    <location>
        <begin position="852"/>
        <end position="1429"/>
    </location>
</feature>
<feature type="chain" id="PRO_0000426274" description="Protease 2A">
    <location>
        <begin position="852"/>
        <end position="1001"/>
    </location>
</feature>
<feature type="chain" id="PRO_0000039587" description="Protein 2B">
    <location>
        <begin position="1002"/>
        <end position="1100"/>
    </location>
</feature>
<feature type="chain" id="PRO_0000039588" description="Protein 2C">
    <location>
        <begin position="1101"/>
        <end position="1429"/>
    </location>
</feature>
<feature type="chain" id="PRO_0000426275" description="P3">
    <location>
        <begin position="1430"/>
        <end position="2185"/>
    </location>
</feature>
<feature type="chain" id="PRO_0000426276" description="Protein 3AB">
    <location>
        <begin position="1430"/>
        <end position="1540"/>
    </location>
</feature>
<feature type="chain" id="PRO_0000039589" description="Protein 3A">
    <location>
        <begin position="1430"/>
        <end position="1518"/>
    </location>
</feature>
<feature type="chain" id="PRO_0000426277" description="Viral protein genome-linked">
    <location>
        <begin position="1519"/>
        <end position="1540"/>
    </location>
</feature>
<feature type="chain" id="PRO_0000426278" description="Protein 3CD">
    <location>
        <begin position="1541"/>
        <end position="2185"/>
    </location>
</feature>
<feature type="chain" id="PRO_0000426279" description="Protease 3C">
    <location>
        <begin position="1541"/>
        <end position="1723"/>
    </location>
</feature>
<feature type="chain" id="PRO_0000426280" description="RNA-directed RNA polymerase">
    <location>
        <begin position="1724"/>
        <end position="2185"/>
    </location>
</feature>
<feature type="topological domain" description="Cytoplasmic" evidence="8">
    <location>
        <begin position="2"/>
        <end position="1495"/>
    </location>
</feature>
<feature type="intramembrane region" evidence="8">
    <location>
        <begin position="1496"/>
        <end position="1511"/>
    </location>
</feature>
<feature type="topological domain" description="Cytoplasmic" evidence="8">
    <location>
        <begin position="1512"/>
        <end position="2185"/>
    </location>
</feature>
<feature type="domain" description="SF3 helicase" evidence="10">
    <location>
        <begin position="1205"/>
        <end position="1361"/>
    </location>
</feature>
<feature type="domain" description="Peptidase C3" evidence="11">
    <location>
        <begin position="1541"/>
        <end position="1719"/>
    </location>
</feature>
<feature type="domain" description="RdRp catalytic" evidence="9">
    <location>
        <begin position="1950"/>
        <end position="2066"/>
    </location>
</feature>
<feature type="zinc finger region" description="C4-type; degenerate" evidence="1">
    <location>
        <begin position="1369"/>
        <end position="1386"/>
    </location>
</feature>
<feature type="region of interest" description="Amphipathic alpha-helix" evidence="8">
    <location>
        <begin position="568"/>
        <end position="584"/>
    </location>
</feature>
<feature type="region of interest" description="Oligomerization" evidence="2">
    <location>
        <begin position="1101"/>
        <end position="1239"/>
    </location>
</feature>
<feature type="region of interest" description="Membrane-binding" evidence="2">
    <location>
        <begin position="1101"/>
        <end position="1173"/>
    </location>
</feature>
<feature type="region of interest" description="RNA-binding" evidence="2">
    <location>
        <begin position="1122"/>
        <end position="1126"/>
    </location>
</feature>
<feature type="region of interest" description="RNA-binding" evidence="2">
    <location>
        <begin position="1413"/>
        <end position="1420"/>
    </location>
</feature>
<feature type="region of interest" description="Oligomerization" evidence="2">
    <location>
        <begin position="1424"/>
        <end position="1429"/>
    </location>
</feature>
<feature type="active site" description="For protease 2A activity" evidence="2">
    <location>
        <position position="872"/>
    </location>
</feature>
<feature type="active site" description="For protease 2A activity" evidence="2">
    <location>
        <position position="890"/>
    </location>
</feature>
<feature type="active site" description="For protease 2A activity" evidence="2">
    <location>
        <position position="961"/>
    </location>
</feature>
<feature type="active site" description="For protease 3C activity" evidence="11">
    <location>
        <position position="1580"/>
    </location>
</feature>
<feature type="active site" description="For protease 3C activity" evidence="11">
    <location>
        <position position="1611"/>
    </location>
</feature>
<feature type="active site" description="For protease 3C activity" evidence="22">
    <location>
        <position position="1687"/>
    </location>
</feature>
<feature type="binding site" evidence="7">
    <location>
        <position position="907"/>
    </location>
    <ligand>
        <name>Zn(2+)</name>
        <dbReference type="ChEBI" id="CHEBI:29105"/>
        <label>1</label>
        <note>structural</note>
    </ligand>
</feature>
<feature type="binding site" evidence="7">
    <location>
        <position position="909"/>
    </location>
    <ligand>
        <name>Zn(2+)</name>
        <dbReference type="ChEBI" id="CHEBI:29105"/>
        <label>1</label>
        <note>structural</note>
    </ligand>
</feature>
<feature type="binding site" evidence="7">
    <location>
        <position position="967"/>
    </location>
    <ligand>
        <name>Zn(2+)</name>
        <dbReference type="ChEBI" id="CHEBI:29105"/>
        <label>1</label>
        <note>structural</note>
    </ligand>
</feature>
<feature type="binding site" evidence="7">
    <location>
        <position position="969"/>
    </location>
    <ligand>
        <name>Zn(2+)</name>
        <dbReference type="ChEBI" id="CHEBI:29105"/>
        <label>1</label>
        <note>structural</note>
    </ligand>
</feature>
<feature type="binding site" evidence="1">
    <location>
        <position position="1369"/>
    </location>
    <ligand>
        <name>Zn(2+)</name>
        <dbReference type="ChEBI" id="CHEBI:29105"/>
        <label>2</label>
    </ligand>
</feature>
<feature type="binding site" evidence="1">
    <location>
        <position position="1381"/>
    </location>
    <ligand>
        <name>Zn(2+)</name>
        <dbReference type="ChEBI" id="CHEBI:29105"/>
        <label>2</label>
    </ligand>
</feature>
<feature type="binding site" evidence="1">
    <location>
        <position position="1386"/>
    </location>
    <ligand>
        <name>Zn(2+)</name>
        <dbReference type="ChEBI" id="CHEBI:29105"/>
        <label>2</label>
    </ligand>
</feature>
<feature type="binding site" evidence="25">
    <location>
        <position position="1956"/>
    </location>
    <ligand>
        <name>Mg(2+)</name>
        <dbReference type="ChEBI" id="CHEBI:18420"/>
        <label>1</label>
        <note>catalytic; for RdRp activity</note>
    </ligand>
</feature>
<feature type="binding site" evidence="25">
    <location>
        <position position="1956"/>
    </location>
    <ligand>
        <name>Mg(2+)</name>
        <dbReference type="ChEBI" id="CHEBI:18420"/>
        <label>2</label>
        <note>catalytic; for RdRp activity</note>
    </ligand>
</feature>
<feature type="binding site" evidence="2">
    <location>
        <position position="2052"/>
    </location>
    <ligand>
        <name>Mg(2+)</name>
        <dbReference type="ChEBI" id="CHEBI:18420"/>
        <label>1</label>
        <note>catalytic; for RdRp activity</note>
    </ligand>
</feature>
<feature type="binding site" evidence="2">
    <location>
        <position position="2052"/>
    </location>
    <ligand>
        <name>Mg(2+)</name>
        <dbReference type="ChEBI" id="CHEBI:18420"/>
        <label>2</label>
        <note>catalytic; for RdRp activity</note>
    </ligand>
</feature>
<feature type="site" description="Cleavage; by autolysis" evidence="2">
    <location>
        <begin position="69"/>
        <end position="70"/>
    </location>
</feature>
<feature type="site" description="Cleavage; by protease 3C" evidence="3">
    <location>
        <begin position="332"/>
        <end position="333"/>
    </location>
</feature>
<feature type="site" description="Cleavage; by autolysis" evidence="3">
    <location>
        <begin position="851"/>
        <end position="852"/>
    </location>
</feature>
<feature type="site" description="Cleavage; by protease 3C" evidence="3">
    <location>
        <begin position="1001"/>
        <end position="1002"/>
    </location>
</feature>
<feature type="site" description="Cleavage; by protease 3C" evidence="3">
    <location>
        <begin position="1100"/>
        <end position="1101"/>
    </location>
</feature>
<feature type="site" description="Involved in the interaction with host RTN3" evidence="6">
    <location>
        <position position="1125"/>
    </location>
</feature>
<feature type="site" description="Cleavage; by protease 3C" evidence="3">
    <location>
        <begin position="1429"/>
        <end position="1430"/>
    </location>
</feature>
<feature type="site" description="Cleavage; by protease 3C" evidence="3">
    <location>
        <begin position="1518"/>
        <end position="1519"/>
    </location>
</feature>
<feature type="site" description="Cleavage; by protease 3C" evidence="3">
    <location>
        <begin position="1540"/>
        <end position="1541"/>
    </location>
</feature>
<feature type="site" description="Cleavage; by protease 3C" evidence="3">
    <location>
        <begin position="1723"/>
        <end position="1724"/>
    </location>
</feature>
<feature type="modified residue" description="O-(5'-phospho-RNA)-tyrosine" evidence="2">
    <location>
        <position position="1521"/>
    </location>
</feature>
<feature type="lipid moiety-binding region" description="N-myristoyl glycine; by host" evidence="2">
    <location>
        <position position="2"/>
    </location>
</feature>
<feature type="mutagenesis site" description="Loss of host TFEB cleavage activity." evidence="18">
    <original>C</original>
    <variation>A</variation>
    <location>
        <position position="1687"/>
    </location>
</feature>
<feature type="sequence conflict" description="In Ref. 2; AAA74400." evidence="23" ref="2">
    <original>R</original>
    <variation>G</variation>
    <location>
        <position position="16"/>
    </location>
</feature>
<feature type="sequence conflict" description="In Ref. 2; AAA74400." evidence="23" ref="2">
    <original>V</original>
    <variation>D</variation>
    <location>
        <position position="177"/>
    </location>
</feature>
<feature type="sequence conflict" description="In Ref. 4; AFS18536." evidence="23" ref="4">
    <original>T</original>
    <variation>S</variation>
    <location>
        <position position="220"/>
    </location>
</feature>
<feature type="sequence conflict" description="In Ref. 2; AAA74400." evidence="23" ref="2">
    <original>P</original>
    <variation>L</variation>
    <location>
        <position position="469"/>
    </location>
</feature>
<feature type="sequence conflict" description="In Ref. 2; AAA74400." evidence="23" ref="2">
    <original>I</original>
    <variation>V</variation>
    <location>
        <position position="487"/>
    </location>
</feature>
<feature type="sequence conflict" description="In Ref. 2; AAA74400 and 4; AFS18536." evidence="23" ref="2 4">
    <original>F</original>
    <variation>Y</variation>
    <location>
        <position position="510"/>
    </location>
</feature>
<feature type="sequence conflict" description="In Ref. 2; AAA74400." evidence="23" ref="2">
    <original>Y</original>
    <variation>C</variation>
    <location>
        <position position="516"/>
    </location>
</feature>
<feature type="sequence conflict" description="In Ref. 2; AAA74400." evidence="23" ref="2">
    <original>Q</original>
    <variation>E</variation>
    <location>
        <position position="566"/>
    </location>
</feature>
<feature type="sequence conflict" description="In Ref. 2; AAA74400." evidence="23" ref="2">
    <original>T</original>
    <variation>N</variation>
    <location>
        <position position="593"/>
    </location>
</feature>
<feature type="sequence conflict" description="In Ref. 2; AAA74400 and 4; AFS18536." evidence="23" ref="2 4">
    <original>K</original>
    <variation>E</variation>
    <location>
        <position position="650"/>
    </location>
</feature>
<feature type="sequence conflict" description="In Ref. 2; AAA74400." evidence="23" ref="2">
    <original>FGQQSGAVYVGN</original>
    <variation>IWTTIRGSVCGD</variation>
    <location>
        <begin position="854"/>
        <end position="865"/>
    </location>
</feature>
<feature type="sequence conflict" description="In Ref. 2; AAA74400." evidence="23" ref="2">
    <original>L</original>
    <variation>S</variation>
    <location>
        <position position="873"/>
    </location>
</feature>
<feature type="sequence conflict" description="In Ref. 2; AAA74400." evidence="23" ref="2">
    <original>A</original>
    <variation>P</variation>
    <location>
        <position position="1097"/>
    </location>
</feature>
<feature type="sequence conflict" description="In Ref. 2; AAA74400." evidence="23" ref="2">
    <original>Q</original>
    <variation>H</variation>
    <location>
        <position position="1280"/>
    </location>
</feature>
<feature type="sequence conflict" description="In Ref. 2; AAA74400." evidence="23" ref="2">
    <original>I</original>
    <variation>F</variation>
    <location>
        <position position="1437"/>
    </location>
</feature>
<feature type="sequence conflict" description="In Ref. 4; AFS18536." evidence="23" ref="4">
    <original>P</original>
    <variation>L</variation>
    <location>
        <position position="1449"/>
    </location>
</feature>
<feature type="sequence conflict" description="In Ref. 2; AAA74400." evidence="23" ref="2">
    <original>V</original>
    <variation>M</variation>
    <location>
        <position position="1503"/>
    </location>
</feature>
<feature type="sequence conflict" description="In Ref. 2; AAA74400." evidence="23" ref="2">
    <original>K</original>
    <variation>E</variation>
    <location>
        <position position="1616"/>
    </location>
</feature>
<feature type="sequence conflict" description="In Ref. 2; AAA74400." evidence="23" ref="2">
    <original>R</original>
    <variation>G</variation>
    <location>
        <position position="1624"/>
    </location>
</feature>
<feature type="sequence conflict" description="In Ref. 2; AAA74400." evidence="23" ref="2">
    <original>R</original>
    <variation>G</variation>
    <location>
        <position position="1627"/>
    </location>
</feature>
<feature type="sequence conflict" description="In Ref. 2; AAA74400." evidence="23" ref="2">
    <original>L</original>
    <variation>V</variation>
    <location>
        <position position="1630"/>
    </location>
</feature>
<feature type="sequence conflict" description="In Ref. 2; AAA74400." evidence="23" ref="2">
    <original>Y</original>
    <variation>N</variation>
    <location>
        <position position="1718"/>
    </location>
</feature>
<feature type="sequence conflict" description="In Ref. 2; AAA74400." evidence="23" ref="2">
    <original>D</original>
    <variation>V</variation>
    <location>
        <position position="1734"/>
    </location>
</feature>
<feature type="sequence conflict" description="In Ref. 2 and 3." evidence="23" ref="2 3">
    <original>E</original>
    <variation>V</variation>
    <location>
        <position position="1758"/>
    </location>
</feature>
<feature type="sequence conflict" description="In Ref. 2 and 3." evidence="23" ref="2 3">
    <original>V</original>
    <variation>R</variation>
    <location>
        <position position="1824"/>
    </location>
</feature>
<feature type="sequence conflict" description="In Ref. 2 and 3." evidence="23" ref="2 3">
    <original>C</original>
    <variation>R</variation>
    <location>
        <position position="1867"/>
    </location>
</feature>
<feature type="sequence conflict" description="In Ref. 2 and 3." evidence="23" ref="2 3">
    <original>Y</original>
    <variation>H</variation>
    <location>
        <position position="1880"/>
    </location>
</feature>
<feature type="sequence conflict" description="In Ref. 2 and 3." evidence="23" ref="2 3">
    <original>D</original>
    <variation>N</variation>
    <location>
        <position position="2001"/>
    </location>
</feature>
<feature type="sequence conflict" description="In Ref. 2 and 3." evidence="23" ref="2 3">
    <original>A</original>
    <variation>V</variation>
    <location>
        <position position="2095"/>
    </location>
</feature>
<feature type="sequence conflict" description="In Ref. 2 and 3." evidence="23" ref="2 3">
    <original>V</original>
    <variation>A</variation>
    <location>
        <position position="2115"/>
    </location>
</feature>
<feature type="sequence conflict" description="In Ref. 2 and 3." evidence="23" ref="2 3">
    <original>S</original>
    <variation>T</variation>
    <location>
        <position position="2175"/>
    </location>
</feature>
<feature type="sequence conflict" description="In Ref. 2 and 3." evidence="23" ref="2 3">
    <original>R</original>
    <variation>G</variation>
    <location>
        <position position="2178"/>
    </location>
</feature>
<feature type="strand" evidence="35">
    <location>
        <begin position="860"/>
        <end position="863"/>
    </location>
</feature>
<feature type="strand" evidence="35">
    <location>
        <begin position="866"/>
        <end position="870"/>
    </location>
</feature>
<feature type="helix" evidence="35">
    <location>
        <begin position="871"/>
        <end position="873"/>
    </location>
</feature>
<feature type="helix" evidence="35">
    <location>
        <begin position="876"/>
        <end position="880"/>
    </location>
</feature>
<feature type="strand" evidence="35">
    <location>
        <begin position="882"/>
        <end position="886"/>
    </location>
</feature>
<feature type="helix" evidence="35">
    <location>
        <begin position="887"/>
        <end position="889"/>
    </location>
</feature>
<feature type="strand" evidence="35">
    <location>
        <begin position="891"/>
        <end position="895"/>
    </location>
</feature>
<feature type="strand" evidence="35">
    <location>
        <begin position="910"/>
        <end position="915"/>
    </location>
</feature>
<feature type="turn" evidence="35">
    <location>
        <begin position="917"/>
        <end position="919"/>
    </location>
</feature>
<feature type="strand" evidence="35">
    <location>
        <begin position="921"/>
        <end position="926"/>
    </location>
</feature>
<feature type="strand" evidence="35">
    <location>
        <begin position="928"/>
        <end position="935"/>
    </location>
</feature>
<feature type="strand" evidence="35">
    <location>
        <begin position="943"/>
        <end position="953"/>
    </location>
</feature>
<feature type="helix" evidence="35">
    <location>
        <begin position="958"/>
        <end position="960"/>
    </location>
</feature>
<feature type="strand" evidence="35">
    <location>
        <begin position="964"/>
        <end position="967"/>
    </location>
</feature>
<feature type="strand" evidence="35">
    <location>
        <begin position="970"/>
        <end position="977"/>
    </location>
</feature>
<feature type="strand" evidence="35">
    <location>
        <begin position="982"/>
        <end position="987"/>
    </location>
</feature>
<feature type="helix" evidence="35">
    <location>
        <begin position="992"/>
        <end position="994"/>
    </location>
</feature>
<feature type="strand" evidence="33">
    <location>
        <begin position="1223"/>
        <end position="1228"/>
    </location>
</feature>
<feature type="helix" evidence="33">
    <location>
        <begin position="1235"/>
        <end position="1249"/>
    </location>
</feature>
<feature type="strand" evidence="33">
    <location>
        <begin position="1254"/>
        <end position="1256"/>
    </location>
</feature>
<feature type="strand" evidence="34">
    <location>
        <begin position="1259"/>
        <end position="1262"/>
    </location>
</feature>
<feature type="turn" evidence="34">
    <location>
        <begin position="1263"/>
        <end position="1266"/>
    </location>
</feature>
<feature type="strand" evidence="33">
    <location>
        <begin position="1271"/>
        <end position="1278"/>
    </location>
</feature>
<feature type="helix" evidence="33">
    <location>
        <begin position="1284"/>
        <end position="1293"/>
    </location>
</feature>
<feature type="strand" evidence="33">
    <location>
        <begin position="1294"/>
        <end position="1297"/>
    </location>
</feature>
<feature type="helix" evidence="33">
    <location>
        <begin position="1304"/>
        <end position="1306"/>
    </location>
</feature>
<feature type="strand" evidence="33">
    <location>
        <begin position="1316"/>
        <end position="1323"/>
    </location>
</feature>
<feature type="helix" evidence="33">
    <location>
        <begin position="1332"/>
        <end position="1341"/>
    </location>
</feature>
<feature type="strand" evidence="33">
    <location>
        <begin position="1343"/>
        <end position="1350"/>
    </location>
</feature>
<feature type="helix" evidence="33">
    <location>
        <begin position="1352"/>
        <end position="1354"/>
    </location>
</feature>
<feature type="helix" evidence="33">
    <location>
        <begin position="1362"/>
        <end position="1366"/>
    </location>
</feature>
<feature type="strand" evidence="33">
    <location>
        <begin position="1376"/>
        <end position="1380"/>
    </location>
</feature>
<feature type="turn" evidence="33">
    <location>
        <begin position="1383"/>
        <end position="1385"/>
    </location>
</feature>
<feature type="strand" evidence="33">
    <location>
        <begin position="1386"/>
        <end position="1394"/>
    </location>
</feature>
<feature type="turn" evidence="33">
    <location>
        <begin position="1395"/>
        <end position="1397"/>
    </location>
</feature>
<feature type="helix" evidence="33">
    <location>
        <begin position="1403"/>
        <end position="1418"/>
    </location>
</feature>
<feature type="helix" evidence="36">
    <location>
        <begin position="1425"/>
        <end position="1428"/>
    </location>
</feature>
<feature type="turn" evidence="30">
    <location>
        <begin position="1528"/>
        <end position="1530"/>
    </location>
</feature>
<feature type="helix" evidence="29">
    <location>
        <begin position="1542"/>
        <end position="1554"/>
    </location>
</feature>
<feature type="strand" evidence="29">
    <location>
        <begin position="1555"/>
        <end position="1560"/>
    </location>
</feature>
<feature type="strand" evidence="29">
    <location>
        <begin position="1563"/>
        <end position="1572"/>
    </location>
</feature>
<feature type="strand" evidence="29">
    <location>
        <begin position="1574"/>
        <end position="1578"/>
    </location>
</feature>
<feature type="helix" evidence="29">
    <location>
        <begin position="1579"/>
        <end position="1581"/>
    </location>
</feature>
<feature type="strand" evidence="29">
    <location>
        <begin position="1585"/>
        <end position="1589"/>
    </location>
</feature>
<feature type="strand" evidence="29">
    <location>
        <begin position="1592"/>
        <end position="1603"/>
    </location>
</feature>
<feature type="strand" evidence="29">
    <location>
        <begin position="1609"/>
        <end position="1617"/>
    </location>
</feature>
<feature type="helix" evidence="29">
    <location>
        <begin position="1627"/>
        <end position="1629"/>
    </location>
</feature>
<feature type="strand" evidence="37">
    <location>
        <begin position="1630"/>
        <end position="1633"/>
    </location>
</feature>
<feature type="strand" evidence="29">
    <location>
        <begin position="1637"/>
        <end position="1644"/>
    </location>
</feature>
<feature type="strand" evidence="29">
    <location>
        <begin position="1646"/>
        <end position="1649"/>
    </location>
</feature>
<feature type="strand" evidence="29">
    <location>
        <begin position="1652"/>
        <end position="1667"/>
    </location>
</feature>
<feature type="strand" evidence="29">
    <location>
        <begin position="1670"/>
        <end position="1680"/>
    </location>
</feature>
<feature type="strand" evidence="29">
    <location>
        <begin position="1690"/>
        <end position="1693"/>
    </location>
</feature>
<feature type="strand" evidence="29">
    <location>
        <begin position="1696"/>
        <end position="1705"/>
    </location>
</feature>
<feature type="strand" evidence="29">
    <location>
        <begin position="1708"/>
        <end position="1713"/>
    </location>
</feature>
<feature type="helix" evidence="29">
    <location>
        <begin position="1716"/>
        <end position="1719"/>
    </location>
</feature>
<feature type="strand" evidence="31">
    <location>
        <begin position="1725"/>
        <end position="1731"/>
    </location>
</feature>
<feature type="helix" evidence="31">
    <location>
        <begin position="1732"/>
        <end position="1735"/>
    </location>
</feature>
<feature type="turn" evidence="31">
    <location>
        <begin position="1752"/>
        <end position="1756"/>
    </location>
</feature>
<feature type="strand" evidence="32">
    <location>
        <begin position="1761"/>
        <end position="1763"/>
    </location>
</feature>
<feature type="helix" evidence="31">
    <location>
        <begin position="1777"/>
        <end position="1782"/>
    </location>
</feature>
<feature type="helix" evidence="31">
    <location>
        <begin position="1795"/>
        <end position="1809"/>
    </location>
</feature>
<feature type="turn" evidence="31">
    <location>
        <begin position="1810"/>
        <end position="1812"/>
    </location>
</feature>
<feature type="helix" evidence="31">
    <location>
        <begin position="1820"/>
        <end position="1825"/>
    </location>
</feature>
<feature type="strand" evidence="31">
    <location>
        <begin position="1835"/>
        <end position="1837"/>
    </location>
</feature>
<feature type="helix" evidence="31">
    <location>
        <begin position="1843"/>
        <end position="1845"/>
    </location>
</feature>
<feature type="helix" evidence="31">
    <location>
        <begin position="1850"/>
        <end position="1853"/>
    </location>
</feature>
<feature type="turn" evidence="31">
    <location>
        <begin position="1856"/>
        <end position="1859"/>
    </location>
</feature>
<feature type="helix" evidence="31">
    <location>
        <begin position="1862"/>
        <end position="1871"/>
    </location>
</feature>
<feature type="strand" evidence="31">
    <location>
        <begin position="1877"/>
        <end position="1881"/>
    </location>
</feature>
<feature type="strand" evidence="32">
    <location>
        <begin position="1885"/>
        <end position="1887"/>
    </location>
</feature>
<feature type="helix" evidence="31">
    <location>
        <begin position="1888"/>
        <end position="1892"/>
    </location>
</feature>
<feature type="strand" evidence="31">
    <location>
        <begin position="1898"/>
        <end position="1901"/>
    </location>
</feature>
<feature type="helix" evidence="31">
    <location>
        <begin position="1904"/>
        <end position="1923"/>
    </location>
</feature>
<feature type="turn" evidence="31">
    <location>
        <begin position="1927"/>
        <end position="1930"/>
    </location>
</feature>
<feature type="helix" evidence="31">
    <location>
        <begin position="1937"/>
        <end position="1947"/>
    </location>
</feature>
<feature type="strand" evidence="31">
    <location>
        <begin position="1950"/>
        <end position="1953"/>
    </location>
</feature>
<feature type="strand" evidence="31">
    <location>
        <begin position="1955"/>
        <end position="1959"/>
    </location>
</feature>
<feature type="helix" evidence="31">
    <location>
        <begin position="1960"/>
        <end position="1963"/>
    </location>
</feature>
<feature type="helix" evidence="31">
    <location>
        <begin position="1966"/>
        <end position="1978"/>
    </location>
</feature>
<feature type="turn" evidence="31">
    <location>
        <begin position="1983"/>
        <end position="1986"/>
    </location>
</feature>
<feature type="helix" evidence="31">
    <location>
        <begin position="1987"/>
        <end position="1993"/>
    </location>
</feature>
<feature type="strand" evidence="31">
    <location>
        <begin position="1994"/>
        <end position="1999"/>
    </location>
</feature>
<feature type="strand" evidence="31">
    <location>
        <begin position="2002"/>
        <end position="2008"/>
    </location>
</feature>
<feature type="helix" evidence="31">
    <location>
        <begin position="2017"/>
        <end position="2036"/>
    </location>
</feature>
<feature type="helix" evidence="31">
    <location>
        <begin position="2042"/>
        <end position="2044"/>
    </location>
</feature>
<feature type="strand" evidence="31">
    <location>
        <begin position="2046"/>
        <end position="2050"/>
    </location>
</feature>
<feature type="strand" evidence="31">
    <location>
        <begin position="2053"/>
        <end position="2060"/>
    </location>
</feature>
<feature type="helix" evidence="31">
    <location>
        <begin position="2064"/>
        <end position="2073"/>
    </location>
</feature>
<feature type="strand" evidence="31">
    <location>
        <begin position="2078"/>
        <end position="2080"/>
    </location>
</feature>
<feature type="strand" evidence="31">
    <location>
        <begin position="2083"/>
        <end position="2085"/>
    </location>
</feature>
<feature type="turn" evidence="31">
    <location>
        <begin position="2092"/>
        <end position="2094"/>
    </location>
</feature>
<feature type="strand" evidence="31">
    <location>
        <begin position="2100"/>
        <end position="2104"/>
    </location>
</feature>
<feature type="strand" evidence="31">
    <location>
        <begin position="2106"/>
        <end position="2108"/>
    </location>
</feature>
<feature type="strand" evidence="31">
    <location>
        <begin position="2111"/>
        <end position="2115"/>
    </location>
</feature>
<feature type="helix" evidence="31">
    <location>
        <begin position="2118"/>
        <end position="2125"/>
    </location>
</feature>
<feature type="strand" evidence="31">
    <location>
        <begin position="2127"/>
        <end position="2129"/>
    </location>
</feature>
<feature type="helix" evidence="31">
    <location>
        <begin position="2131"/>
        <end position="2133"/>
    </location>
</feature>
<feature type="helix" evidence="31">
    <location>
        <begin position="2134"/>
        <end position="2145"/>
    </location>
</feature>
<feature type="helix" evidence="31">
    <location>
        <begin position="2146"/>
        <end position="2148"/>
    </location>
</feature>
<feature type="helix" evidence="31">
    <location>
        <begin position="2150"/>
        <end position="2160"/>
    </location>
</feature>
<feature type="helix" evidence="31">
    <location>
        <begin position="2164"/>
        <end position="2168"/>
    </location>
</feature>
<feature type="helix" evidence="31">
    <location>
        <begin position="2174"/>
        <end position="2184"/>
    </location>
</feature>
<organismHost>
    <name type="scientific">Homo sapiens</name>
    <name type="common">Human</name>
    <dbReference type="NCBI Taxonomy" id="9606"/>
</organismHost>
<evidence type="ECO:0000250" key="1">
    <source>
        <dbReference type="UniProtKB" id="B9VUU3"/>
    </source>
</evidence>
<evidence type="ECO:0000250" key="2">
    <source>
        <dbReference type="UniProtKB" id="P03300"/>
    </source>
</evidence>
<evidence type="ECO:0000250" key="3">
    <source>
        <dbReference type="UniProtKB" id="P03301"/>
    </source>
</evidence>
<evidence type="ECO:0000250" key="4">
    <source>
        <dbReference type="UniProtKB" id="P03303"/>
    </source>
</evidence>
<evidence type="ECO:0000250" key="5">
    <source>
        <dbReference type="UniProtKB" id="P04936"/>
    </source>
</evidence>
<evidence type="ECO:0000250" key="6">
    <source>
        <dbReference type="UniProtKB" id="Q66478"/>
    </source>
</evidence>
<evidence type="ECO:0000250" key="7">
    <source>
        <dbReference type="UniProtKB" id="Q9QF31"/>
    </source>
</evidence>
<evidence type="ECO:0000255" key="8"/>
<evidence type="ECO:0000255" key="9">
    <source>
        <dbReference type="PROSITE-ProRule" id="PRU00539"/>
    </source>
</evidence>
<evidence type="ECO:0000255" key="10">
    <source>
        <dbReference type="PROSITE-ProRule" id="PRU00551"/>
    </source>
</evidence>
<evidence type="ECO:0000255" key="11">
    <source>
        <dbReference type="PROSITE-ProRule" id="PRU01222"/>
    </source>
</evidence>
<evidence type="ECO:0000269" key="12">
    <source>
    </source>
</evidence>
<evidence type="ECO:0000269" key="13">
    <source>
    </source>
</evidence>
<evidence type="ECO:0000269" key="14">
    <source>
    </source>
</evidence>
<evidence type="ECO:0000269" key="15">
    <source>
    </source>
</evidence>
<evidence type="ECO:0000269" key="16">
    <source>
    </source>
</evidence>
<evidence type="ECO:0000269" key="17">
    <source>
    </source>
</evidence>
<evidence type="ECO:0000269" key="18">
    <source>
    </source>
</evidence>
<evidence type="ECO:0000269" key="19">
    <source>
    </source>
</evidence>
<evidence type="ECO:0000269" key="20">
    <source>
    </source>
</evidence>
<evidence type="ECO:0000269" key="21">
    <source>
    </source>
</evidence>
<evidence type="ECO:0000269" key="22">
    <source>
    </source>
</evidence>
<evidence type="ECO:0000305" key="23"/>
<evidence type="ECO:0000305" key="24">
    <source>
    </source>
</evidence>
<evidence type="ECO:0000305" key="25">
    <source>
    </source>
</evidence>
<evidence type="ECO:0000305" key="26">
    <source>
    </source>
</evidence>
<evidence type="ECO:0000305" key="27">
    <source>
    </source>
</evidence>
<evidence type="ECO:0000305" key="28">
    <source>
    </source>
</evidence>
<evidence type="ECO:0007829" key="29">
    <source>
        <dbReference type="PDB" id="2ZU1"/>
    </source>
</evidence>
<evidence type="ECO:0007829" key="30">
    <source>
        <dbReference type="PDB" id="3CDW"/>
    </source>
</evidence>
<evidence type="ECO:0007829" key="31">
    <source>
        <dbReference type="PDB" id="4WFZ"/>
    </source>
</evidence>
<evidence type="ECO:0007829" key="32">
    <source>
        <dbReference type="PDB" id="4Y2A"/>
    </source>
</evidence>
<evidence type="ECO:0007829" key="33">
    <source>
        <dbReference type="PDB" id="6S3A"/>
    </source>
</evidence>
<evidence type="ECO:0007829" key="34">
    <source>
        <dbReference type="PDB" id="6T3W"/>
    </source>
</evidence>
<evidence type="ECO:0007829" key="35">
    <source>
        <dbReference type="PDB" id="7LMS"/>
    </source>
</evidence>
<evidence type="ECO:0007829" key="36">
    <source>
        <dbReference type="PDB" id="7W0Q"/>
    </source>
</evidence>
<evidence type="ECO:0007829" key="37">
    <source>
        <dbReference type="PDB" id="8S6F"/>
    </source>
</evidence>